<accession>Q8NCC3</accession>
<accession>B3KMF3</accession>
<accession>B4DUD1</accession>
<accession>Q53GZ1</accession>
<accession>Q9NPQ6</accession>
<accession>Q9UG04</accession>
<accession>Q9Y2B3</accession>
<feature type="signal peptide" evidence="5 7">
    <location>
        <begin position="1"/>
        <end position="33"/>
    </location>
</feature>
<feature type="chain" id="PRO_0000017808" description="Lysosomal phospholipase A and acyltransferase">
    <location>
        <begin position="34"/>
        <end position="412"/>
    </location>
</feature>
<feature type="active site" description="Acyl-ester intermediate" evidence="4 10 34">
    <location>
        <position position="198"/>
    </location>
</feature>
<feature type="active site" description="Charge relay system" evidence="24">
    <location>
        <position position="360"/>
    </location>
</feature>
<feature type="active site" description="Charge relay system" evidence="24">
    <location>
        <position position="392"/>
    </location>
</feature>
<feature type="binding site" evidence="24 34">
    <location>
        <position position="46"/>
    </location>
    <ligand>
        <name>substrate</name>
    </ligand>
</feature>
<feature type="binding site" evidence="12">
    <location>
        <position position="198"/>
    </location>
    <ligand>
        <name>Zn(2+)</name>
        <dbReference type="ChEBI" id="CHEBI:29105"/>
    </ligand>
</feature>
<feature type="binding site" evidence="24 33">
    <location>
        <position position="199"/>
    </location>
    <ligand>
        <name>substrate</name>
    </ligand>
</feature>
<feature type="binding site" evidence="12">
    <location>
        <position position="340"/>
    </location>
    <ligand>
        <name>Zn(2+)</name>
        <dbReference type="ChEBI" id="CHEBI:29105"/>
    </ligand>
</feature>
<feature type="binding site" evidence="12">
    <location>
        <position position="355"/>
    </location>
    <ligand>
        <name>Zn(2+)</name>
        <dbReference type="ChEBI" id="CHEBI:29105"/>
    </ligand>
</feature>
<feature type="binding site" evidence="12">
    <location>
        <position position="392"/>
    </location>
    <ligand>
        <name>Zn(2+)</name>
        <dbReference type="ChEBI" id="CHEBI:29105"/>
    </ligand>
</feature>
<feature type="glycosylation site" description="N-linked (GlcNAc...) asparagine" evidence="4 10 28 29 30 31 32 33 34">
    <location>
        <position position="99"/>
    </location>
</feature>
<feature type="glycosylation site" description="N-linked (GlcNAc...) asparagine" evidence="4 10 28 29 30 31 32 33 34">
    <location>
        <position position="273"/>
    </location>
</feature>
<feature type="glycosylation site" description="N-linked (GlcNAc...) asparagine" evidence="4 10 28 29 30 31 32 33 34">
    <location>
        <position position="289"/>
    </location>
</feature>
<feature type="glycosylation site" description="N-linked (GlcNAc...) asparagine" evidence="4 10 28 29 30 31 32 33 34">
    <location>
        <position position="398"/>
    </location>
</feature>
<feature type="disulfide bond" evidence="10 28 29 30 31 32 33 34">
    <location>
        <begin position="65"/>
        <end position="89"/>
    </location>
</feature>
<feature type="splice variant" id="VSP_056689" description="In isoform 2." evidence="16">
    <original>VPGDLGNQLEAKLDKPTVVHYLCSKKTESYFTIWLNLELLLPVIIDCWIDNIRLVYNKTSRATQFPDGVDVR</original>
    <variation>GWFTTKHPGPPSFLMVWMYVSLALGRPSHWSSWTPAKAAWVPISTPWWRALWAGATHGVRMSEGLPMTGAEP</variation>
    <location>
        <begin position="43"/>
        <end position="114"/>
    </location>
</feature>
<feature type="splice variant" id="VSP_056690" description="In isoform 2." evidence="16">
    <location>
        <begin position="115"/>
        <end position="208"/>
    </location>
</feature>
<feature type="mutagenesis site" description="Decreases membrane binding, phospholipase and transacylase activity at acidic pH." evidence="10 11">
    <original>D</original>
    <variation>A</variation>
    <variation>C</variation>
    <location>
        <position position="46"/>
    </location>
</feature>
<feature type="mutagenesis site" description="Has no effect on membrane binding or transacylase activity at acidic pH. Increases membrane binding and transacylase activity at neutral pH by 2-fold and 8-fold, respectively." evidence="11">
    <original>D</original>
    <variation>F</variation>
    <location>
        <position position="46"/>
    </location>
</feature>
<feature type="mutagenesis site" description="No effect on phospholipase activity. Strongly decreases transacylase activity and association with membranes." evidence="10">
    <original>L</original>
    <variation>S</variation>
    <location>
        <position position="83"/>
    </location>
</feature>
<feature type="mutagenesis site" description="No effect on phospholipase activity. Strongly decreases transacylase activity and association with membranes." evidence="10">
    <original>V</original>
    <variation>S</variation>
    <location>
        <position position="85"/>
    </location>
</feature>
<feature type="mutagenesis site" description="Loss of glycosylation site. Leads to retention in the endoplasmic reticulum and nearly abolishes the production of the mature, active enzyme." evidence="9">
    <original>N</original>
    <variation>A</variation>
    <location>
        <position position="99"/>
    </location>
</feature>
<feature type="mutagenesis site" description="Abolishes phospholipase and transacylase activity. Abolishes association with membranes." evidence="10">
    <original>S</original>
    <variation>A</variation>
    <location>
        <position position="198"/>
    </location>
</feature>
<feature type="mutagenesis site" description="No effect on phospholipase activity. Abolishes transacylase activity. Has no effect on association with membranes." evidence="10">
    <original>K</original>
    <variation>A</variation>
    <location>
        <position position="235"/>
    </location>
</feature>
<feature type="mutagenesis site" description="Loss of glycosylation site. Mildly reduces production of the mature, active enzyme." evidence="9">
    <original>N</original>
    <variation>A</variation>
    <location>
        <position position="273"/>
    </location>
</feature>
<feature type="mutagenesis site" description="Loss of glycosylation site. Mildly reduces production of the mature, active enzyme." evidence="9">
    <original>N</original>
    <variation>A</variation>
    <location>
        <position position="289"/>
    </location>
</feature>
<feature type="mutagenesis site" description="No effect on phospholipase activity. Strongly decreases transacylase activity and abolishes association with membranes." evidence="10">
    <original>T</original>
    <variation>A</variation>
    <location>
        <position position="362"/>
    </location>
</feature>
<feature type="mutagenesis site" description="Loss of glycosylation site. Slightly reduces production of the mature, active enzyme." evidence="9">
    <original>N</original>
    <variation>A</variation>
    <location>
        <position position="398"/>
    </location>
</feature>
<feature type="sequence conflict" description="In Ref. 4; BAD96510." evidence="19" ref="4">
    <original>I</original>
    <variation>T</variation>
    <location>
        <position position="94"/>
    </location>
</feature>
<feature type="sequence conflict" description="In Ref. 3; BAC11233." evidence="19" ref="3">
    <original>Q</original>
    <variation>R</variation>
    <location>
        <position position="370"/>
    </location>
</feature>
<feature type="strand" evidence="35">
    <location>
        <begin position="40"/>
        <end position="43"/>
    </location>
</feature>
<feature type="strand" evidence="35">
    <location>
        <begin position="51"/>
        <end position="56"/>
    </location>
</feature>
<feature type="strand" evidence="35">
    <location>
        <begin position="73"/>
        <end position="77"/>
    </location>
</feature>
<feature type="helix" evidence="35">
    <location>
        <begin position="79"/>
        <end position="82"/>
    </location>
</feature>
<feature type="helix" evidence="35">
    <location>
        <begin position="86"/>
        <end position="94"/>
    </location>
</feature>
<feature type="strand" evidence="35">
    <location>
        <begin position="97"/>
        <end position="99"/>
    </location>
</feature>
<feature type="turn" evidence="35">
    <location>
        <begin position="100"/>
        <end position="103"/>
    </location>
</feature>
<feature type="strand" evidence="35">
    <location>
        <begin position="104"/>
        <end position="106"/>
    </location>
</feature>
<feature type="strand" evidence="35">
    <location>
        <begin position="111"/>
        <end position="114"/>
    </location>
</feature>
<feature type="helix" evidence="35">
    <location>
        <begin position="122"/>
        <end position="125"/>
    </location>
</feature>
<feature type="strand" evidence="35">
    <location>
        <begin position="126"/>
        <end position="128"/>
    </location>
</feature>
<feature type="helix" evidence="35">
    <location>
        <begin position="133"/>
        <end position="135"/>
    </location>
</feature>
<feature type="strand" evidence="35">
    <location>
        <begin position="136"/>
        <end position="138"/>
    </location>
</feature>
<feature type="helix" evidence="35">
    <location>
        <begin position="139"/>
        <end position="147"/>
    </location>
</feature>
<feature type="turn" evidence="35">
    <location>
        <begin position="153"/>
        <end position="155"/>
    </location>
</feature>
<feature type="strand" evidence="35">
    <location>
        <begin position="156"/>
        <end position="158"/>
    </location>
</feature>
<feature type="helix" evidence="35">
    <location>
        <begin position="167"/>
        <end position="169"/>
    </location>
</feature>
<feature type="helix" evidence="35">
    <location>
        <begin position="171"/>
        <end position="188"/>
    </location>
</feature>
<feature type="strand" evidence="35">
    <location>
        <begin position="192"/>
        <end position="197"/>
    </location>
</feature>
<feature type="helix" evidence="35">
    <location>
        <begin position="200"/>
        <end position="209"/>
    </location>
</feature>
<feature type="helix" evidence="35">
    <location>
        <begin position="213"/>
        <end position="219"/>
    </location>
</feature>
<feature type="strand" evidence="35">
    <location>
        <begin position="220"/>
        <end position="227"/>
    </location>
</feature>
<feature type="helix" evidence="35">
    <location>
        <begin position="235"/>
        <end position="242"/>
    </location>
</feature>
<feature type="helix" evidence="35">
    <location>
        <begin position="253"/>
        <end position="262"/>
    </location>
</feature>
<feature type="helix" evidence="35">
    <location>
        <begin position="264"/>
        <end position="268"/>
    </location>
</feature>
<feature type="turn" evidence="35">
    <location>
        <begin position="273"/>
        <end position="275"/>
    </location>
</feature>
<feature type="strand" evidence="35">
    <location>
        <begin position="281"/>
        <end position="284"/>
    </location>
</feature>
<feature type="strand" evidence="35">
    <location>
        <begin position="289"/>
        <end position="291"/>
    </location>
</feature>
<feature type="helix" evidence="36">
    <location>
        <begin position="292"/>
        <end position="294"/>
    </location>
</feature>
<feature type="helix" evidence="35">
    <location>
        <begin position="295"/>
        <end position="301"/>
    </location>
</feature>
<feature type="helix" evidence="35">
    <location>
        <begin position="305"/>
        <end position="314"/>
    </location>
</feature>
<feature type="strand" evidence="35">
    <location>
        <begin position="328"/>
        <end position="336"/>
    </location>
</feature>
<feature type="strand" evidence="35">
    <location>
        <begin position="338"/>
        <end position="343"/>
    </location>
</feature>
<feature type="turn" evidence="35">
    <location>
        <begin position="347"/>
        <end position="349"/>
    </location>
</feature>
<feature type="strand" evidence="35">
    <location>
        <begin position="353"/>
        <end position="364"/>
    </location>
</feature>
<feature type="helix" evidence="35">
    <location>
        <begin position="365"/>
        <end position="367"/>
    </location>
</feature>
<feature type="helix" evidence="35">
    <location>
        <begin position="368"/>
        <end position="374"/>
    </location>
</feature>
<feature type="turn" evidence="35">
    <location>
        <begin position="375"/>
        <end position="377"/>
    </location>
</feature>
<feature type="strand" evidence="35">
    <location>
        <begin position="382"/>
        <end position="388"/>
    </location>
</feature>
<feature type="helix" evidence="35">
    <location>
        <begin position="394"/>
        <end position="397"/>
    </location>
</feature>
<feature type="helix" evidence="35">
    <location>
        <begin position="399"/>
        <end position="410"/>
    </location>
</feature>
<dbReference type="EC" id="2.3.1.-" evidence="6 8 9 10"/>
<dbReference type="EC" id="3.1.1.32" evidence="12"/>
<dbReference type="EC" id="3.1.1.4" evidence="21"/>
<dbReference type="EC" id="3.1.1.5" evidence="5"/>
<dbReference type="EMBL" id="AB017494">
    <property type="protein sequence ID" value="BAA76877.1"/>
    <property type="molecule type" value="mRNA"/>
</dbReference>
<dbReference type="EMBL" id="AY358425">
    <property type="protein sequence ID" value="AAQ88791.1"/>
    <property type="molecule type" value="mRNA"/>
</dbReference>
<dbReference type="EMBL" id="AK001705">
    <property type="protein sequence ID" value="BAG50965.1"/>
    <property type="molecule type" value="mRNA"/>
</dbReference>
<dbReference type="EMBL" id="AK074828">
    <property type="protein sequence ID" value="BAC11233.1"/>
    <property type="molecule type" value="mRNA"/>
</dbReference>
<dbReference type="EMBL" id="AK300596">
    <property type="protein sequence ID" value="BAG62293.1"/>
    <property type="molecule type" value="mRNA"/>
</dbReference>
<dbReference type="EMBL" id="AK222790">
    <property type="protein sequence ID" value="BAD96510.1"/>
    <property type="molecule type" value="mRNA"/>
</dbReference>
<dbReference type="EMBL" id="AL110209">
    <property type="protein sequence ID" value="CAB53675.1"/>
    <property type="status" value="ALT_INIT"/>
    <property type="molecule type" value="mRNA"/>
</dbReference>
<dbReference type="EMBL" id="AC020978">
    <property type="status" value="NOT_ANNOTATED_CDS"/>
    <property type="molecule type" value="Genomic_DNA"/>
</dbReference>
<dbReference type="EMBL" id="CH471092">
    <property type="protein sequence ID" value="EAW83217.1"/>
    <property type="molecule type" value="Genomic_DNA"/>
</dbReference>
<dbReference type="EMBL" id="BC011640">
    <property type="protein sequence ID" value="AAH11640.2"/>
    <property type="molecule type" value="mRNA"/>
</dbReference>
<dbReference type="EMBL" id="BC062605">
    <property type="protein sequence ID" value="AAH62605.1"/>
    <property type="molecule type" value="mRNA"/>
</dbReference>
<dbReference type="EMBL" id="AL389957">
    <property type="protein sequence ID" value="CAB97531.1"/>
    <property type="molecule type" value="mRNA"/>
</dbReference>
<dbReference type="CCDS" id="CCDS10864.1">
    <molecule id="Q8NCC3-1"/>
</dbReference>
<dbReference type="PIR" id="T14755">
    <property type="entry name" value="T14755"/>
</dbReference>
<dbReference type="RefSeq" id="NP_036452.1">
    <molecule id="Q8NCC3-1"/>
    <property type="nucleotide sequence ID" value="NM_012320.4"/>
</dbReference>
<dbReference type="PDB" id="4X90">
    <property type="method" value="X-ray"/>
    <property type="resolution" value="1.84 A"/>
    <property type="chains" value="A/B/C/D=34-412"/>
</dbReference>
<dbReference type="PDB" id="4X91">
    <property type="method" value="X-ray"/>
    <property type="resolution" value="2.30 A"/>
    <property type="chains" value="A/B/C/D=34-412"/>
</dbReference>
<dbReference type="PDB" id="4X92">
    <property type="method" value="X-ray"/>
    <property type="resolution" value="3.00 A"/>
    <property type="chains" value="A=34-412"/>
</dbReference>
<dbReference type="PDB" id="4X93">
    <property type="method" value="X-ray"/>
    <property type="resolution" value="2.60 A"/>
    <property type="chains" value="A/B=34-412"/>
</dbReference>
<dbReference type="PDB" id="4X94">
    <property type="method" value="X-ray"/>
    <property type="resolution" value="2.70 A"/>
    <property type="chains" value="A=34-412"/>
</dbReference>
<dbReference type="PDB" id="4X95">
    <property type="method" value="X-ray"/>
    <property type="resolution" value="3.08 A"/>
    <property type="chains" value="A/B=34-412"/>
</dbReference>
<dbReference type="PDB" id="4X97">
    <property type="method" value="X-ray"/>
    <property type="resolution" value="2.65 A"/>
    <property type="chains" value="A/B/C/D=34-412"/>
</dbReference>
<dbReference type="PDB" id="6MTW">
    <property type="method" value="X-ray"/>
    <property type="resolution" value="2.00 A"/>
    <property type="chains" value="A/B=34-412"/>
</dbReference>
<dbReference type="PDBsum" id="4X90"/>
<dbReference type="PDBsum" id="4X91"/>
<dbReference type="PDBsum" id="4X92"/>
<dbReference type="PDBsum" id="4X93"/>
<dbReference type="PDBsum" id="4X94"/>
<dbReference type="PDBsum" id="4X95"/>
<dbReference type="PDBsum" id="4X97"/>
<dbReference type="PDBsum" id="6MTW"/>
<dbReference type="SMR" id="Q8NCC3"/>
<dbReference type="BioGRID" id="117181">
    <property type="interactions" value="24"/>
</dbReference>
<dbReference type="FunCoup" id="Q8NCC3">
    <property type="interactions" value="875"/>
</dbReference>
<dbReference type="IntAct" id="Q8NCC3">
    <property type="interactions" value="11"/>
</dbReference>
<dbReference type="STRING" id="9606.ENSP00000219345"/>
<dbReference type="BindingDB" id="Q8NCC3"/>
<dbReference type="ChEMBL" id="CHEMBL4986"/>
<dbReference type="SwissLipids" id="SLP:000001924"/>
<dbReference type="ESTHER" id="human-PLA2G15">
    <property type="family name" value="PC-sterol_acyltransferase"/>
</dbReference>
<dbReference type="GlyConnect" id="1292">
    <property type="glycosylation" value="4 N-Linked glycans (2 sites)"/>
</dbReference>
<dbReference type="GlyCosmos" id="Q8NCC3">
    <property type="glycosylation" value="4 sites, 4 glycans"/>
</dbReference>
<dbReference type="GlyGen" id="Q8NCC3">
    <property type="glycosylation" value="4 sites, 23 N-linked glycans (4 sites)"/>
</dbReference>
<dbReference type="iPTMnet" id="Q8NCC3"/>
<dbReference type="PhosphoSitePlus" id="Q8NCC3"/>
<dbReference type="BioMuta" id="PLA2G15"/>
<dbReference type="DMDM" id="44888104"/>
<dbReference type="jPOST" id="Q8NCC3"/>
<dbReference type="MassIVE" id="Q8NCC3"/>
<dbReference type="PaxDb" id="9606-ENSP00000219345"/>
<dbReference type="PeptideAtlas" id="Q8NCC3"/>
<dbReference type="ProteomicsDB" id="5176"/>
<dbReference type="ProteomicsDB" id="72871">
    <molecule id="Q8NCC3-1"/>
</dbReference>
<dbReference type="Pumba" id="Q8NCC3"/>
<dbReference type="Antibodypedia" id="29747">
    <property type="antibodies" value="106 antibodies from 18 providers"/>
</dbReference>
<dbReference type="DNASU" id="23659"/>
<dbReference type="Ensembl" id="ENST00000219345.10">
    <molecule id="Q8NCC3-1"/>
    <property type="protein sequence ID" value="ENSP00000219345.5"/>
    <property type="gene ID" value="ENSG00000103066.13"/>
</dbReference>
<dbReference type="Ensembl" id="ENST00000413021.2">
    <molecule id="Q8NCC3-2"/>
    <property type="protein sequence ID" value="ENSP00000394197.2"/>
    <property type="gene ID" value="ENSG00000103066.13"/>
</dbReference>
<dbReference type="GeneID" id="23659"/>
<dbReference type="KEGG" id="hsa:23659"/>
<dbReference type="MANE-Select" id="ENST00000219345.10">
    <property type="protein sequence ID" value="ENSP00000219345.5"/>
    <property type="RefSeq nucleotide sequence ID" value="NM_012320.4"/>
    <property type="RefSeq protein sequence ID" value="NP_036452.1"/>
</dbReference>
<dbReference type="UCSC" id="uc002evr.4">
    <molecule id="Q8NCC3-1"/>
    <property type="organism name" value="human"/>
</dbReference>
<dbReference type="AGR" id="HGNC:17163"/>
<dbReference type="CTD" id="23659"/>
<dbReference type="DisGeNET" id="23659"/>
<dbReference type="GeneCards" id="PLA2G15"/>
<dbReference type="HGNC" id="HGNC:17163">
    <property type="gene designation" value="PLA2G15"/>
</dbReference>
<dbReference type="HPA" id="ENSG00000103066">
    <property type="expression patterns" value="Tissue enhanced (skeletal)"/>
</dbReference>
<dbReference type="MIM" id="609362">
    <property type="type" value="gene"/>
</dbReference>
<dbReference type="neXtProt" id="NX_Q8NCC3"/>
<dbReference type="OpenTargets" id="ENSG00000103066"/>
<dbReference type="PharmGKB" id="PA164724567"/>
<dbReference type="VEuPathDB" id="HostDB:ENSG00000103066"/>
<dbReference type="eggNOG" id="KOG2369">
    <property type="taxonomic scope" value="Eukaryota"/>
</dbReference>
<dbReference type="GeneTree" id="ENSGT00940000157499"/>
<dbReference type="HOGENOM" id="CLU_075830_0_0_1"/>
<dbReference type="InParanoid" id="Q8NCC3"/>
<dbReference type="OMA" id="QMTPPGV"/>
<dbReference type="OrthoDB" id="190846at2759"/>
<dbReference type="PAN-GO" id="Q8NCC3">
    <property type="GO annotations" value="6 GO annotations based on evolutionary models"/>
</dbReference>
<dbReference type="PhylomeDB" id="Q8NCC3"/>
<dbReference type="TreeFam" id="TF313258"/>
<dbReference type="BRENDA" id="3.1.1.4">
    <property type="organism ID" value="2681"/>
</dbReference>
<dbReference type="PathwayCommons" id="Q8NCC3"/>
<dbReference type="Reactome" id="R-HSA-1483115">
    <property type="pathway name" value="Hydrolysis of LPC"/>
</dbReference>
<dbReference type="SignaLink" id="Q8NCC3"/>
<dbReference type="BioGRID-ORCS" id="23659">
    <property type="hits" value="7 hits in 1151 CRISPR screens"/>
</dbReference>
<dbReference type="ChiTaRS" id="PLA2G15">
    <property type="organism name" value="human"/>
</dbReference>
<dbReference type="EvolutionaryTrace" id="Q8NCC3"/>
<dbReference type="GeneWiki" id="LYPLA3_(gene)"/>
<dbReference type="GenomeRNAi" id="23659"/>
<dbReference type="Pharos" id="Q8NCC3">
    <property type="development level" value="Tbio"/>
</dbReference>
<dbReference type="PRO" id="PR:Q8NCC3"/>
<dbReference type="Proteomes" id="UP000005640">
    <property type="component" value="Chromosome 16"/>
</dbReference>
<dbReference type="RNAct" id="Q8NCC3">
    <property type="molecule type" value="protein"/>
</dbReference>
<dbReference type="Bgee" id="ENSG00000103066">
    <property type="expression patterns" value="Expressed in gastrocnemius and 136 other cell types or tissues"/>
</dbReference>
<dbReference type="ExpressionAtlas" id="Q8NCC3">
    <property type="expression patterns" value="baseline and differential"/>
</dbReference>
<dbReference type="GO" id="GO:0070062">
    <property type="term" value="C:extracellular exosome"/>
    <property type="evidence" value="ECO:0007005"/>
    <property type="project" value="UniProtKB"/>
</dbReference>
<dbReference type="GO" id="GO:0005576">
    <property type="term" value="C:extracellular region"/>
    <property type="evidence" value="ECO:0000304"/>
    <property type="project" value="Reactome"/>
</dbReference>
<dbReference type="GO" id="GO:0005615">
    <property type="term" value="C:extracellular space"/>
    <property type="evidence" value="ECO:0000314"/>
    <property type="project" value="UniProtKB"/>
</dbReference>
<dbReference type="GO" id="GO:0043231">
    <property type="term" value="C:intracellular membrane-bounded organelle"/>
    <property type="evidence" value="ECO:0000314"/>
    <property type="project" value="HPA"/>
</dbReference>
<dbReference type="GO" id="GO:0005764">
    <property type="term" value="C:lysosome"/>
    <property type="evidence" value="ECO:0000250"/>
    <property type="project" value="UniProtKB"/>
</dbReference>
<dbReference type="GO" id="GO:0016020">
    <property type="term" value="C:membrane"/>
    <property type="evidence" value="ECO:0007669"/>
    <property type="project" value="UniProtKB-SubCell"/>
</dbReference>
<dbReference type="GO" id="GO:0005654">
    <property type="term" value="C:nucleoplasm"/>
    <property type="evidence" value="ECO:0000314"/>
    <property type="project" value="HPA"/>
</dbReference>
<dbReference type="GO" id="GO:0016411">
    <property type="term" value="F:acylglycerol O-acyltransferase activity"/>
    <property type="evidence" value="ECO:0000250"/>
    <property type="project" value="UniProtKB"/>
</dbReference>
<dbReference type="GO" id="GO:0047499">
    <property type="term" value="F:calcium-independent phospholipase A2 activity"/>
    <property type="evidence" value="ECO:0000314"/>
    <property type="project" value="UniProtKB"/>
</dbReference>
<dbReference type="GO" id="GO:0004622">
    <property type="term" value="F:lysophospholipase activity"/>
    <property type="evidence" value="ECO:0000304"/>
    <property type="project" value="ProtInc"/>
</dbReference>
<dbReference type="GO" id="GO:0008374">
    <property type="term" value="F:O-acyltransferase activity"/>
    <property type="evidence" value="ECO:0000314"/>
    <property type="project" value="UniProtKB"/>
</dbReference>
<dbReference type="GO" id="GO:0008970">
    <property type="term" value="F:phospholipase A1 activity"/>
    <property type="evidence" value="ECO:0000314"/>
    <property type="project" value="UniProtKB"/>
</dbReference>
<dbReference type="GO" id="GO:0005543">
    <property type="term" value="F:phospholipid binding"/>
    <property type="evidence" value="ECO:0000304"/>
    <property type="project" value="ProtInc"/>
</dbReference>
<dbReference type="GO" id="GO:0008270">
    <property type="term" value="F:zinc ion binding"/>
    <property type="evidence" value="ECO:0000314"/>
    <property type="project" value="UniProtKB"/>
</dbReference>
<dbReference type="GO" id="GO:0006672">
    <property type="term" value="P:ceramide metabolic process"/>
    <property type="evidence" value="ECO:0000314"/>
    <property type="project" value="UniProtKB"/>
</dbReference>
<dbReference type="GO" id="GO:0006651">
    <property type="term" value="P:diacylglycerol biosynthetic process"/>
    <property type="evidence" value="ECO:0000250"/>
    <property type="project" value="UniProtKB"/>
</dbReference>
<dbReference type="GO" id="GO:0009062">
    <property type="term" value="P:fatty acid catabolic process"/>
    <property type="evidence" value="ECO:0000304"/>
    <property type="project" value="ProtInc"/>
</dbReference>
<dbReference type="GO" id="GO:0006650">
    <property type="term" value="P:glycerophospholipid metabolic process"/>
    <property type="evidence" value="ECO:0000314"/>
    <property type="project" value="UniProtKB"/>
</dbReference>
<dbReference type="GO" id="GO:0034638">
    <property type="term" value="P:phosphatidylcholine catabolic process"/>
    <property type="evidence" value="ECO:0000250"/>
    <property type="project" value="UniProtKB"/>
</dbReference>
<dbReference type="GO" id="GO:0046470">
    <property type="term" value="P:phosphatidylcholine metabolic process"/>
    <property type="evidence" value="ECO:0000314"/>
    <property type="project" value="UniProtKB"/>
</dbReference>
<dbReference type="GO" id="GO:0046338">
    <property type="term" value="P:phosphatidylethanolamine catabolic process"/>
    <property type="evidence" value="ECO:0000250"/>
    <property type="project" value="UniProtKB"/>
</dbReference>
<dbReference type="GO" id="GO:0046471">
    <property type="term" value="P:phosphatidylglycerol metabolic process"/>
    <property type="evidence" value="ECO:0000314"/>
    <property type="project" value="UniProtKB"/>
</dbReference>
<dbReference type="GO" id="GO:0006658">
    <property type="term" value="P:phosphatidylserine metabolic process"/>
    <property type="evidence" value="ECO:0000314"/>
    <property type="project" value="UniProtKB"/>
</dbReference>
<dbReference type="GO" id="GO:0006644">
    <property type="term" value="P:phospholipid metabolic process"/>
    <property type="evidence" value="ECO:0000304"/>
    <property type="project" value="Reactome"/>
</dbReference>
<dbReference type="FunFam" id="3.40.50.1820:FF:000221">
    <property type="entry name" value="Group XV phospholipase A2"/>
    <property type="match status" value="1"/>
</dbReference>
<dbReference type="FunFam" id="3.40.50.1820:FF:000166">
    <property type="entry name" value="group XV phospholipase A2 isoform X1"/>
    <property type="match status" value="1"/>
</dbReference>
<dbReference type="Gene3D" id="3.40.50.1820">
    <property type="entry name" value="alpha/beta hydrolase"/>
    <property type="match status" value="1"/>
</dbReference>
<dbReference type="InterPro" id="IPR029058">
    <property type="entry name" value="AB_hydrolase_fold"/>
</dbReference>
<dbReference type="InterPro" id="IPR003386">
    <property type="entry name" value="LACT/PDAT_acylTrfase"/>
</dbReference>
<dbReference type="PANTHER" id="PTHR11440">
    <property type="entry name" value="LECITHIN-CHOLESTEROL ACYLTRANSFERASE-RELATED"/>
    <property type="match status" value="1"/>
</dbReference>
<dbReference type="Pfam" id="PF02450">
    <property type="entry name" value="LCAT"/>
    <property type="match status" value="1"/>
</dbReference>
<dbReference type="SUPFAM" id="SSF53474">
    <property type="entry name" value="alpha/beta-Hydrolases"/>
    <property type="match status" value="1"/>
</dbReference>
<name>PAG15_HUMAN</name>
<evidence type="ECO:0000250" key="1">
    <source>
        <dbReference type="UniProtKB" id="Q675A5"/>
    </source>
</evidence>
<evidence type="ECO:0000250" key="2">
    <source>
        <dbReference type="UniProtKB" id="Q8VEB4"/>
    </source>
</evidence>
<evidence type="ECO:0000250" key="3">
    <source>
        <dbReference type="UniProtKB" id="Q8WMP9"/>
    </source>
</evidence>
<evidence type="ECO:0000255" key="4"/>
<evidence type="ECO:0000269" key="5">
    <source>
    </source>
</evidence>
<evidence type="ECO:0000269" key="6">
    <source>
    </source>
</evidence>
<evidence type="ECO:0000269" key="7">
    <source>
    </source>
</evidence>
<evidence type="ECO:0000269" key="8">
    <source>
    </source>
</evidence>
<evidence type="ECO:0000269" key="9">
    <source>
    </source>
</evidence>
<evidence type="ECO:0000269" key="10">
    <source>
    </source>
</evidence>
<evidence type="ECO:0000269" key="11">
    <source>
    </source>
</evidence>
<evidence type="ECO:0000269" key="12">
    <source>
    </source>
</evidence>
<evidence type="ECO:0000269" key="13">
    <source>
    </source>
</evidence>
<evidence type="ECO:0000303" key="14">
    <source>
    </source>
</evidence>
<evidence type="ECO:0000303" key="15">
    <source>
    </source>
</evidence>
<evidence type="ECO:0000303" key="16">
    <source>
    </source>
</evidence>
<evidence type="ECO:0000303" key="17">
    <source>
    </source>
</evidence>
<evidence type="ECO:0000303" key="18">
    <source>
    </source>
</evidence>
<evidence type="ECO:0000305" key="19"/>
<evidence type="ECO:0000305" key="20">
    <source>
    </source>
</evidence>
<evidence type="ECO:0000305" key="21">
    <source>
    </source>
</evidence>
<evidence type="ECO:0000305" key="22">
    <source>
    </source>
</evidence>
<evidence type="ECO:0000305" key="23">
    <source>
    </source>
</evidence>
<evidence type="ECO:0000305" key="24">
    <source>
    </source>
</evidence>
<evidence type="ECO:0000305" key="25">
    <source>
    </source>
</evidence>
<evidence type="ECO:0000305" key="26">
    <source>
    </source>
</evidence>
<evidence type="ECO:0000312" key="27">
    <source>
        <dbReference type="HGNC" id="HGNC:17163"/>
    </source>
</evidence>
<evidence type="ECO:0007744" key="28">
    <source>
        <dbReference type="PDB" id="4X90"/>
    </source>
</evidence>
<evidence type="ECO:0007744" key="29">
    <source>
        <dbReference type="PDB" id="4X91"/>
    </source>
</evidence>
<evidence type="ECO:0007744" key="30">
    <source>
        <dbReference type="PDB" id="4X92"/>
    </source>
</evidence>
<evidence type="ECO:0007744" key="31">
    <source>
        <dbReference type="PDB" id="4X93"/>
    </source>
</evidence>
<evidence type="ECO:0007744" key="32">
    <source>
        <dbReference type="PDB" id="4X94"/>
    </source>
</evidence>
<evidence type="ECO:0007744" key="33">
    <source>
        <dbReference type="PDB" id="4X95"/>
    </source>
</evidence>
<evidence type="ECO:0007744" key="34">
    <source>
        <dbReference type="PDB" id="4X97"/>
    </source>
</evidence>
<evidence type="ECO:0007829" key="35">
    <source>
        <dbReference type="PDB" id="4X90"/>
    </source>
</evidence>
<evidence type="ECO:0007829" key="36">
    <source>
        <dbReference type="PDB" id="6MTW"/>
    </source>
</evidence>
<sequence>MGLHLRPYRVGLLPDGLLFLLLLLMLLADPALPAGRHPPVVLVPGDLGNQLEAKLDKPTVVHYLCSKKTESYFTIWLNLELLLPVIIDCWIDNIRLVYNKTSRATQFPDGVDVRVPGFGKTFSLEFLDPSKSSVGSYFHTMVESLVGWGYTRGEDVRGAPYDWRRAPNENGPYFLALREMIEEMYQLYGGPVVLVAHSMGNMYTLYFLQRQPQAWKDKYIRAFVSLGAPWGGVAKTLRVLASGDNNRIPVIGPLKIREQQRSAVSTSWLLPYNYTWSPEKVFVQTPTINYTLRDYRKFFQDIGFEDGWLMRQDTEGLVEATMPPGVQLHCLYGTGVPTPDSFYYESFPDRDPKICFGDGDGTVNLKSALQCQAWQSRQEHQVLLQELPGSEHIEMLANATTLAYLKRVLLGP</sequence>
<gene>
    <name evidence="27" type="primary">PLA2G15</name>
    <name type="synonym">LYPLA3</name>
    <name type="ORF">UNQ341/PRO540</name>
</gene>
<keyword id="KW-0002">3D-structure</keyword>
<keyword id="KW-0012">Acyltransferase</keyword>
<keyword id="KW-0025">Alternative splicing</keyword>
<keyword id="KW-0903">Direct protein sequencing</keyword>
<keyword id="KW-1015">Disulfide bond</keyword>
<keyword id="KW-0276">Fatty acid metabolism</keyword>
<keyword id="KW-0325">Glycoprotein</keyword>
<keyword id="KW-0378">Hydrolase</keyword>
<keyword id="KW-0442">Lipid degradation</keyword>
<keyword id="KW-0443">Lipid metabolism</keyword>
<keyword id="KW-0458">Lysosome</keyword>
<keyword id="KW-0472">Membrane</keyword>
<keyword id="KW-0479">Metal-binding</keyword>
<keyword id="KW-1267">Proteomics identification</keyword>
<keyword id="KW-1185">Reference proteome</keyword>
<keyword id="KW-0964">Secreted</keyword>
<keyword id="KW-0732">Signal</keyword>
<keyword id="KW-0808">Transferase</keyword>
<keyword id="KW-0862">Zinc</keyword>
<organism>
    <name type="scientific">Homo sapiens</name>
    <name type="common">Human</name>
    <dbReference type="NCBI Taxonomy" id="9606"/>
    <lineage>
        <taxon>Eukaryota</taxon>
        <taxon>Metazoa</taxon>
        <taxon>Chordata</taxon>
        <taxon>Craniata</taxon>
        <taxon>Vertebrata</taxon>
        <taxon>Euteleostomi</taxon>
        <taxon>Mammalia</taxon>
        <taxon>Eutheria</taxon>
        <taxon>Euarchontoglires</taxon>
        <taxon>Primates</taxon>
        <taxon>Haplorrhini</taxon>
        <taxon>Catarrhini</taxon>
        <taxon>Hominidae</taxon>
        <taxon>Homo</taxon>
    </lineage>
</organism>
<proteinExistence type="evidence at protein level"/>
<protein>
    <recommendedName>
        <fullName>Lysosomal phospholipase A and acyltransferase</fullName>
        <ecNumber evidence="6 8 9 10">2.3.1.-</ecNumber>
        <ecNumber evidence="12">3.1.1.32</ecNumber>
        <ecNumber evidence="21">3.1.1.4</ecNumber>
    </recommendedName>
    <alternativeName>
        <fullName evidence="15">1-O-acylceramide synthase</fullName>
        <shortName evidence="15">ACS</shortName>
    </alternativeName>
    <alternativeName>
        <fullName evidence="14">LCAT-like lysophospholipase</fullName>
        <shortName evidence="14 15">LLPL</shortName>
        <ecNumber evidence="5">3.1.1.5</ecNumber>
    </alternativeName>
    <alternativeName>
        <fullName>Lysophospholipase 3</fullName>
    </alternativeName>
    <alternativeName>
        <fullName evidence="15 17 18">Lysosomal phospholipase A2</fullName>
        <shortName evidence="15 17 18">LPLA2</shortName>
    </alternativeName>
    <alternativeName>
        <fullName>Phospholipase A2 group XV</fullName>
        <shortName evidence="18">PLA2G15</shortName>
    </alternativeName>
</protein>
<reference key="1">
    <citation type="journal article" date="1999" name="Biochem. Biophys. Res. Commun.">
        <title>Cloning and expression of a novel lysophospholipase which structurally resembles lecithin cholesterol acyltransferase.</title>
        <authorList>
            <person name="Taniyama Y."/>
            <person name="Shibata S."/>
            <person name="Kita S."/>
            <person name="Horikoshi K."/>
            <person name="Shirafuji H."/>
            <person name="Sumino Y."/>
            <person name="Fujino M."/>
        </authorList>
    </citation>
    <scope>NUCLEOTIDE SEQUENCE [MRNA] (ISOFORM 1)</scope>
    <scope>PROTEIN SEQUENCE OF 34-43</scope>
    <scope>SUBCELLULAR LOCATION</scope>
    <scope>TISSUE SPECIFICITY</scope>
    <scope>FUNCTION</scope>
    <scope>CATALYTIC ACTIVITY</scope>
    <source>
        <tissue>Heart</tissue>
        <tissue>Kidney</tissue>
    </source>
</reference>
<reference key="2">
    <citation type="journal article" date="2003" name="Genome Res.">
        <title>The secreted protein discovery initiative (SPDI), a large-scale effort to identify novel human secreted and transmembrane proteins: a bioinformatics assessment.</title>
        <authorList>
            <person name="Clark H.F."/>
            <person name="Gurney A.L."/>
            <person name="Abaya E."/>
            <person name="Baker K."/>
            <person name="Baldwin D.T."/>
            <person name="Brush J."/>
            <person name="Chen J."/>
            <person name="Chow B."/>
            <person name="Chui C."/>
            <person name="Crowley C."/>
            <person name="Currell B."/>
            <person name="Deuel B."/>
            <person name="Dowd P."/>
            <person name="Eaton D."/>
            <person name="Foster J.S."/>
            <person name="Grimaldi C."/>
            <person name="Gu Q."/>
            <person name="Hass P.E."/>
            <person name="Heldens S."/>
            <person name="Huang A."/>
            <person name="Kim H.S."/>
            <person name="Klimowski L."/>
            <person name="Jin Y."/>
            <person name="Johnson S."/>
            <person name="Lee J."/>
            <person name="Lewis L."/>
            <person name="Liao D."/>
            <person name="Mark M.R."/>
            <person name="Robbie E."/>
            <person name="Sanchez C."/>
            <person name="Schoenfeld J."/>
            <person name="Seshagiri S."/>
            <person name="Simmons L."/>
            <person name="Singh J."/>
            <person name="Smith V."/>
            <person name="Stinson J."/>
            <person name="Vagts A."/>
            <person name="Vandlen R.L."/>
            <person name="Watanabe C."/>
            <person name="Wieand D."/>
            <person name="Woods K."/>
            <person name="Xie M.-H."/>
            <person name="Yansura D.G."/>
            <person name="Yi S."/>
            <person name="Yu G."/>
            <person name="Yuan J."/>
            <person name="Zhang M."/>
            <person name="Zhang Z."/>
            <person name="Goddard A.D."/>
            <person name="Wood W.I."/>
            <person name="Godowski P.J."/>
            <person name="Gray A.M."/>
        </authorList>
    </citation>
    <scope>NUCLEOTIDE SEQUENCE [LARGE SCALE MRNA] (ISOFORM 1)</scope>
</reference>
<reference key="3">
    <citation type="journal article" date="2004" name="Nat. Genet.">
        <title>Complete sequencing and characterization of 21,243 full-length human cDNAs.</title>
        <authorList>
            <person name="Ota T."/>
            <person name="Suzuki Y."/>
            <person name="Nishikawa T."/>
            <person name="Otsuki T."/>
            <person name="Sugiyama T."/>
            <person name="Irie R."/>
            <person name="Wakamatsu A."/>
            <person name="Hayashi K."/>
            <person name="Sato H."/>
            <person name="Nagai K."/>
            <person name="Kimura K."/>
            <person name="Makita H."/>
            <person name="Sekine M."/>
            <person name="Obayashi M."/>
            <person name="Nishi T."/>
            <person name="Shibahara T."/>
            <person name="Tanaka T."/>
            <person name="Ishii S."/>
            <person name="Yamamoto J."/>
            <person name="Saito K."/>
            <person name="Kawai Y."/>
            <person name="Isono Y."/>
            <person name="Nakamura Y."/>
            <person name="Nagahari K."/>
            <person name="Murakami K."/>
            <person name="Yasuda T."/>
            <person name="Iwayanagi T."/>
            <person name="Wagatsuma M."/>
            <person name="Shiratori A."/>
            <person name="Sudo H."/>
            <person name="Hosoiri T."/>
            <person name="Kaku Y."/>
            <person name="Kodaira H."/>
            <person name="Kondo H."/>
            <person name="Sugawara M."/>
            <person name="Takahashi M."/>
            <person name="Kanda K."/>
            <person name="Yokoi T."/>
            <person name="Furuya T."/>
            <person name="Kikkawa E."/>
            <person name="Omura Y."/>
            <person name="Abe K."/>
            <person name="Kamihara K."/>
            <person name="Katsuta N."/>
            <person name="Sato K."/>
            <person name="Tanikawa M."/>
            <person name="Yamazaki M."/>
            <person name="Ninomiya K."/>
            <person name="Ishibashi T."/>
            <person name="Yamashita H."/>
            <person name="Murakawa K."/>
            <person name="Fujimori K."/>
            <person name="Tanai H."/>
            <person name="Kimata M."/>
            <person name="Watanabe M."/>
            <person name="Hiraoka S."/>
            <person name="Chiba Y."/>
            <person name="Ishida S."/>
            <person name="Ono Y."/>
            <person name="Takiguchi S."/>
            <person name="Watanabe S."/>
            <person name="Yosida M."/>
            <person name="Hotuta T."/>
            <person name="Kusano J."/>
            <person name="Kanehori K."/>
            <person name="Takahashi-Fujii A."/>
            <person name="Hara H."/>
            <person name="Tanase T.-O."/>
            <person name="Nomura Y."/>
            <person name="Togiya S."/>
            <person name="Komai F."/>
            <person name="Hara R."/>
            <person name="Takeuchi K."/>
            <person name="Arita M."/>
            <person name="Imose N."/>
            <person name="Musashino K."/>
            <person name="Yuuki H."/>
            <person name="Oshima A."/>
            <person name="Sasaki N."/>
            <person name="Aotsuka S."/>
            <person name="Yoshikawa Y."/>
            <person name="Matsunawa H."/>
            <person name="Ichihara T."/>
            <person name="Shiohata N."/>
            <person name="Sano S."/>
            <person name="Moriya S."/>
            <person name="Momiyama H."/>
            <person name="Satoh N."/>
            <person name="Takami S."/>
            <person name="Terashima Y."/>
            <person name="Suzuki O."/>
            <person name="Nakagawa S."/>
            <person name="Senoh A."/>
            <person name="Mizoguchi H."/>
            <person name="Goto Y."/>
            <person name="Shimizu F."/>
            <person name="Wakebe H."/>
            <person name="Hishigaki H."/>
            <person name="Watanabe T."/>
            <person name="Sugiyama A."/>
            <person name="Takemoto M."/>
            <person name="Kawakami B."/>
            <person name="Yamazaki M."/>
            <person name="Watanabe K."/>
            <person name="Kumagai A."/>
            <person name="Itakura S."/>
            <person name="Fukuzumi Y."/>
            <person name="Fujimori Y."/>
            <person name="Komiyama M."/>
            <person name="Tashiro H."/>
            <person name="Tanigami A."/>
            <person name="Fujiwara T."/>
            <person name="Ono T."/>
            <person name="Yamada K."/>
            <person name="Fujii Y."/>
            <person name="Ozaki K."/>
            <person name="Hirao M."/>
            <person name="Ohmori Y."/>
            <person name="Kawabata A."/>
            <person name="Hikiji T."/>
            <person name="Kobatake N."/>
            <person name="Inagaki H."/>
            <person name="Ikema Y."/>
            <person name="Okamoto S."/>
            <person name="Okitani R."/>
            <person name="Kawakami T."/>
            <person name="Noguchi S."/>
            <person name="Itoh T."/>
            <person name="Shigeta K."/>
            <person name="Senba T."/>
            <person name="Matsumura K."/>
            <person name="Nakajima Y."/>
            <person name="Mizuno T."/>
            <person name="Morinaga M."/>
            <person name="Sasaki M."/>
            <person name="Togashi T."/>
            <person name="Oyama M."/>
            <person name="Hata H."/>
            <person name="Watanabe M."/>
            <person name="Komatsu T."/>
            <person name="Mizushima-Sugano J."/>
            <person name="Satoh T."/>
            <person name="Shirai Y."/>
            <person name="Takahashi Y."/>
            <person name="Nakagawa K."/>
            <person name="Okumura K."/>
            <person name="Nagase T."/>
            <person name="Nomura N."/>
            <person name="Kikuchi H."/>
            <person name="Masuho Y."/>
            <person name="Yamashita R."/>
            <person name="Nakai K."/>
            <person name="Yada T."/>
            <person name="Nakamura Y."/>
            <person name="Ohara O."/>
            <person name="Isogai T."/>
            <person name="Sugano S."/>
        </authorList>
    </citation>
    <scope>NUCLEOTIDE SEQUENCE [LARGE SCALE MRNA] (ISOFORMS 1 AND 2)</scope>
    <source>
        <tissue>Teratocarcinoma</tissue>
    </source>
</reference>
<reference key="4">
    <citation type="submission" date="2005-04" db="EMBL/GenBank/DDBJ databases">
        <authorList>
            <person name="Suzuki Y."/>
            <person name="Sugano S."/>
            <person name="Totoki Y."/>
            <person name="Toyoda A."/>
            <person name="Takeda T."/>
            <person name="Sakaki Y."/>
            <person name="Tanaka A."/>
            <person name="Yokoyama S."/>
        </authorList>
    </citation>
    <scope>NUCLEOTIDE SEQUENCE [LARGE SCALE MRNA] (ISOFORM 1)</scope>
    <source>
        <tissue>Liver</tissue>
    </source>
</reference>
<reference key="5">
    <citation type="journal article" date="2007" name="BMC Genomics">
        <title>The full-ORF clone resource of the German cDNA consortium.</title>
        <authorList>
            <person name="Bechtel S."/>
            <person name="Rosenfelder H."/>
            <person name="Duda A."/>
            <person name="Schmidt C.P."/>
            <person name="Ernst U."/>
            <person name="Wellenreuther R."/>
            <person name="Mehrle A."/>
            <person name="Schuster C."/>
            <person name="Bahr A."/>
            <person name="Bloecker H."/>
            <person name="Heubner D."/>
            <person name="Hoerlein A."/>
            <person name="Michel G."/>
            <person name="Wedler H."/>
            <person name="Koehrer K."/>
            <person name="Ottenwaelder B."/>
            <person name="Poustka A."/>
            <person name="Wiemann S."/>
            <person name="Schupp I."/>
        </authorList>
    </citation>
    <scope>NUCLEOTIDE SEQUENCE [LARGE SCALE MRNA] (ISOFORM 1)</scope>
    <source>
        <tissue>Brain</tissue>
    </source>
</reference>
<reference key="6">
    <citation type="journal article" date="2004" name="Nature">
        <title>The sequence and analysis of duplication-rich human chromosome 16.</title>
        <authorList>
            <person name="Martin J."/>
            <person name="Han C."/>
            <person name="Gordon L.A."/>
            <person name="Terry A."/>
            <person name="Prabhakar S."/>
            <person name="She X."/>
            <person name="Xie G."/>
            <person name="Hellsten U."/>
            <person name="Chan Y.M."/>
            <person name="Altherr M."/>
            <person name="Couronne O."/>
            <person name="Aerts A."/>
            <person name="Bajorek E."/>
            <person name="Black S."/>
            <person name="Blumer H."/>
            <person name="Branscomb E."/>
            <person name="Brown N.C."/>
            <person name="Bruno W.J."/>
            <person name="Buckingham J.M."/>
            <person name="Callen D.F."/>
            <person name="Campbell C.S."/>
            <person name="Campbell M.L."/>
            <person name="Campbell E.W."/>
            <person name="Caoile C."/>
            <person name="Challacombe J.F."/>
            <person name="Chasteen L.A."/>
            <person name="Chertkov O."/>
            <person name="Chi H.C."/>
            <person name="Christensen M."/>
            <person name="Clark L.M."/>
            <person name="Cohn J.D."/>
            <person name="Denys M."/>
            <person name="Detter J.C."/>
            <person name="Dickson M."/>
            <person name="Dimitrijevic-Bussod M."/>
            <person name="Escobar J."/>
            <person name="Fawcett J.J."/>
            <person name="Flowers D."/>
            <person name="Fotopulos D."/>
            <person name="Glavina T."/>
            <person name="Gomez M."/>
            <person name="Gonzales E."/>
            <person name="Goodstein D."/>
            <person name="Goodwin L.A."/>
            <person name="Grady D.L."/>
            <person name="Grigoriev I."/>
            <person name="Groza M."/>
            <person name="Hammon N."/>
            <person name="Hawkins T."/>
            <person name="Haydu L."/>
            <person name="Hildebrand C.E."/>
            <person name="Huang W."/>
            <person name="Israni S."/>
            <person name="Jett J."/>
            <person name="Jewett P.B."/>
            <person name="Kadner K."/>
            <person name="Kimball H."/>
            <person name="Kobayashi A."/>
            <person name="Krawczyk M.-C."/>
            <person name="Leyba T."/>
            <person name="Longmire J.L."/>
            <person name="Lopez F."/>
            <person name="Lou Y."/>
            <person name="Lowry S."/>
            <person name="Ludeman T."/>
            <person name="Manohar C.F."/>
            <person name="Mark G.A."/>
            <person name="McMurray K.L."/>
            <person name="Meincke L.J."/>
            <person name="Morgan J."/>
            <person name="Moyzis R.K."/>
            <person name="Mundt M.O."/>
            <person name="Munk A.C."/>
            <person name="Nandkeshwar R.D."/>
            <person name="Pitluck S."/>
            <person name="Pollard M."/>
            <person name="Predki P."/>
            <person name="Parson-Quintana B."/>
            <person name="Ramirez L."/>
            <person name="Rash S."/>
            <person name="Retterer J."/>
            <person name="Ricke D.O."/>
            <person name="Robinson D.L."/>
            <person name="Rodriguez A."/>
            <person name="Salamov A."/>
            <person name="Saunders E.H."/>
            <person name="Scott D."/>
            <person name="Shough T."/>
            <person name="Stallings R.L."/>
            <person name="Stalvey M."/>
            <person name="Sutherland R.D."/>
            <person name="Tapia R."/>
            <person name="Tesmer J.G."/>
            <person name="Thayer N."/>
            <person name="Thompson L.S."/>
            <person name="Tice H."/>
            <person name="Torney D.C."/>
            <person name="Tran-Gyamfi M."/>
            <person name="Tsai M."/>
            <person name="Ulanovsky L.E."/>
            <person name="Ustaszewska A."/>
            <person name="Vo N."/>
            <person name="White P.S."/>
            <person name="Williams A.L."/>
            <person name="Wills P.L."/>
            <person name="Wu J.-R."/>
            <person name="Wu K."/>
            <person name="Yang J."/>
            <person name="DeJong P."/>
            <person name="Bruce D."/>
            <person name="Doggett N.A."/>
            <person name="Deaven L."/>
            <person name="Schmutz J."/>
            <person name="Grimwood J."/>
            <person name="Richardson P."/>
            <person name="Rokhsar D.S."/>
            <person name="Eichler E.E."/>
            <person name="Gilna P."/>
            <person name="Lucas S.M."/>
            <person name="Myers R.M."/>
            <person name="Rubin E.M."/>
            <person name="Pennacchio L.A."/>
        </authorList>
    </citation>
    <scope>NUCLEOTIDE SEQUENCE [LARGE SCALE GENOMIC DNA]</scope>
</reference>
<reference key="7">
    <citation type="submission" date="2005-07" db="EMBL/GenBank/DDBJ databases">
        <authorList>
            <person name="Mural R.J."/>
            <person name="Istrail S."/>
            <person name="Sutton G.G."/>
            <person name="Florea L."/>
            <person name="Halpern A.L."/>
            <person name="Mobarry C.M."/>
            <person name="Lippert R."/>
            <person name="Walenz B."/>
            <person name="Shatkay H."/>
            <person name="Dew I."/>
            <person name="Miller J.R."/>
            <person name="Flanigan M.J."/>
            <person name="Edwards N.J."/>
            <person name="Bolanos R."/>
            <person name="Fasulo D."/>
            <person name="Halldorsson B.V."/>
            <person name="Hannenhalli S."/>
            <person name="Turner R."/>
            <person name="Yooseph S."/>
            <person name="Lu F."/>
            <person name="Nusskern D.R."/>
            <person name="Shue B.C."/>
            <person name="Zheng X.H."/>
            <person name="Zhong F."/>
            <person name="Delcher A.L."/>
            <person name="Huson D.H."/>
            <person name="Kravitz S.A."/>
            <person name="Mouchard L."/>
            <person name="Reinert K."/>
            <person name="Remington K.A."/>
            <person name="Clark A.G."/>
            <person name="Waterman M.S."/>
            <person name="Eichler E.E."/>
            <person name="Adams M.D."/>
            <person name="Hunkapiller M.W."/>
            <person name="Myers E.W."/>
            <person name="Venter J.C."/>
        </authorList>
    </citation>
    <scope>NUCLEOTIDE SEQUENCE [LARGE SCALE GENOMIC DNA]</scope>
</reference>
<reference key="8">
    <citation type="journal article" date="2004" name="Genome Res.">
        <title>The status, quality, and expansion of the NIH full-length cDNA project: the Mammalian Gene Collection (MGC).</title>
        <authorList>
            <consortium name="The MGC Project Team"/>
        </authorList>
    </citation>
    <scope>NUCLEOTIDE SEQUENCE [LARGE SCALE MRNA] (ISOFORM 1)</scope>
    <source>
        <tissue>Brain</tissue>
        <tissue>Colon</tissue>
    </source>
</reference>
<reference key="9">
    <citation type="journal article" date="2004" name="Protein Sci.">
        <title>Signal peptide prediction based on analysis of experimentally verified cleavage sites.</title>
        <authorList>
            <person name="Zhang Z."/>
            <person name="Henzel W.J."/>
        </authorList>
    </citation>
    <scope>PROTEIN SEQUENCE OF 34-48</scope>
</reference>
<reference key="10">
    <citation type="submission" date="2000-07" db="EMBL/GenBank/DDBJ databases">
        <authorList>
            <consortium name="The European IMAGE consortium"/>
        </authorList>
    </citation>
    <scope>NUCLEOTIDE SEQUENCE [LARGE SCALE MRNA] OF 221-412 (ISOFORM 1)</scope>
</reference>
<reference key="11">
    <citation type="journal article" date="2002" name="J. Biol. Chem.">
        <title>Cloning and characterization of a lysosomal phospholipase A2, 1-O-acylceramide synthase.</title>
        <authorList>
            <person name="Hiraoka M."/>
            <person name="Abe A."/>
            <person name="Shayman J.A."/>
        </authorList>
    </citation>
    <scope>GLYCOSYLATION</scope>
    <scope>FUNCTION</scope>
    <scope>CATALYTIC ACTIVITY</scope>
</reference>
<reference key="12">
    <citation type="journal article" date="2010" name="J. Lipid Res.">
        <title>The measurement of lysosomal phospholipase A2 activity in plasma.</title>
        <authorList>
            <person name="Abe A."/>
            <person name="Kelly R."/>
            <person name="Shayman J.A."/>
        </authorList>
    </citation>
    <scope>SUBCELLULAR LOCATION</scope>
    <scope>TISSUE SPECIFICITY</scope>
    <scope>FUNCTION</scope>
    <scope>CATALYTIC ACTIVITY</scope>
</reference>
<reference key="13">
    <citation type="journal article" date="2013" name="J. Lipid Res.">
        <title>Role of N-glycosylation of human lysosomal phospholipase A2 for the formation of catalytically active enzyme.</title>
        <authorList>
            <person name="Hiraoka M."/>
            <person name="Okamoto K."/>
            <person name="Ohguro H."/>
            <person name="Abe A."/>
        </authorList>
    </citation>
    <scope>GLYCOSYLATION</scope>
    <scope>FUNCTION</scope>
    <scope>CATALYTIC ACTIVITY</scope>
    <scope>SUBCELLULAR LOCATION</scope>
    <scope>MUTAGENESIS OF ASN-99; ASN-273; ASN-289 AND ASN-398</scope>
</reference>
<reference key="14">
    <citation type="journal article" date="2018" name="J. Lipid Res.">
        <title>Determinants of pH profile and acyl chain selectivity in lysosomal phospholipase A2.</title>
        <authorList>
            <person name="Hinkovska-Galcheva V."/>
            <person name="Kelly R."/>
            <person name="Manthei K.A."/>
            <person name="Bouley R."/>
            <person name="Yuan W."/>
            <person name="Schwendeman A."/>
            <person name="Tesmer J.J.G."/>
            <person name="Shayman J.A."/>
        </authorList>
    </citation>
    <scope>FUNCTION</scope>
    <scope>CATALYTIC ACTIVITY</scope>
    <scope>BIOPHYSICOCHEMICAL PROPERTIES</scope>
    <scope>MUTAGENESIS OF ASP-46</scope>
</reference>
<reference key="15">
    <citation type="journal article" date="2023" name="Commun. Biol.">
        <title>Lysosomal phospholipase A2 contributes to the biosynthesis of the atypical late endosome lipid bis(monoacylglycero)phosphate.</title>
        <authorList>
            <person name="Chen J."/>
            <person name="Cazenave-Gassiot A."/>
            <person name="Xu Y."/>
            <person name="Piroli P."/>
            <person name="Hwang R. Jr."/>
            <person name="DeFreitas L."/>
            <person name="Chan R.B."/>
            <person name="Di Paolo G."/>
            <person name="Nandakumar R."/>
            <person name="Wenk M.R."/>
            <person name="Marquer C."/>
        </authorList>
    </citation>
    <scope>FUNCTION</scope>
    <scope>CATALYTIC ACTIVITY</scope>
</reference>
<reference key="16">
    <citation type="journal article" date="2015" name="Nat. Commun.">
        <title>Structure and function of lysosomal phospholipase A2 and lecithin:cholesterol acyltransferase.</title>
        <authorList>
            <person name="Glukhova A."/>
            <person name="Hinkovska-Galcheva V."/>
            <person name="Kelly R."/>
            <person name="Abe A."/>
            <person name="Shayman J.A."/>
            <person name="Tesmer J.J."/>
        </authorList>
    </citation>
    <scope>X-RAY CRYSTALLOGRAPHY (1.84 ANGSTROMS) OF 34-412 IN COMPLEX WITH SYNTHETIC INHIBITOR</scope>
    <scope>FUNCTION</scope>
    <scope>CATALYTIC ACTIVITY</scope>
    <scope>ACTIVE SITE</scope>
    <scope>SUBCELLULAR LOCATION</scope>
    <scope>DISULFIDE BOND</scope>
    <scope>MUTAGENESIS OF ASP-46; LEU-83; VAL-85; SER-198; LYS-235 AND THR-362</scope>
    <scope>GLYCOSYLATION AT ASN-99; ASN-273; ASN-289 AND ASN-398</scope>
</reference>
<reference key="17">
    <citation type="journal article" date="2019" name="Biochemistry">
        <title>Structural Basis of Lysosomal Phospholipase A2 Inhibition by Zn2.</title>
        <authorList>
            <person name="Bouley R.A."/>
            <person name="Hinkovska-Galcheva V."/>
            <person name="Shayman J.A."/>
            <person name="Tesmer J.J.G."/>
        </authorList>
    </citation>
    <scope>X-RAY CRYSTALLOGRAPHY (2.00 ANGSTROMS) OF 34-412 IN COMPLEX WITH ZINC IONS</scope>
    <scope>FUNCTION</scope>
    <scope>CATALYTIC ACTIVITY</scope>
    <scope>ACTIVITY REGULATION</scope>
</reference>
<comment type="function">
    <text evidence="2 5 6 8 9 10 11 12 13">Has dual calcium-independent phospholipase and O-acyltransferase activities with a potential role in glycerophospholipid homeostasis and remodeling of acyl groups of lipophilic alcohols present in acidic cellular compartments (PubMed:10092508, PubMed:11790796, PubMed:20410020, PubMed:23958596, PubMed:25727495, PubMed:29724779). Catalyzes hydrolysis of the ester bond of the fatty acyl group attached at sn-1 or sn-2 position of phospholipids (phospholipase A1 or A2 activity) and transfer it to the hydroxyl group at the first carbon of lipophilic alcohols (O-acyltransferase activity) (PubMed:10092508, PubMed:11790796, PubMed:20410020, PubMed:23958596, PubMed:25727495, PubMed:29724779, PubMed:36823305). Among preferred fatty acyl donors are phosphatidylcholines, phosphatidylethanolamines, phosphatidylglycerols and phosphatidylserines (PubMed:29724779, PubMed:36823305). Favors sn-2 over sn-1 deacylation of unsaturated fatty acyl groups of phosphatidylcholines, phosphatidylethanolamines, and phosphatidylglycerols (PubMed:36823305). Among preferred fatty acyl acceptors are natural lipophilic alcohols including short-chain ceramide N-acetyl-sphingosine (C2 ceramide), alkylacylglycerols, monoacylglycerols, and acylethanolamides such as anandamide and oleoylethanolamide (PubMed:29724779). Selectively hydrolyzes the sn-1 fatty acyl group of truncated oxidized phospholipids and may play a role in detoxification of reactive oxidized phospholipids during oxidative stress (PubMed:30830753). Required for normal phospholipid degradation in alveolar macrophages with potential implications in the clearance of pulmonary surfactant, which is mainly composed of dipalmitoylphosphatidylcholine (1,2-dihexadecanoyl-sn-glycero-3-phosphocholine) (By similarity). Involved in the first step of bis(monoacylglycero)phosphate (BMP) de novo synthesis from phosphatidylglycerol (1,2-diacyl-sn-glycero-3-phospho-(1'-sn-glycerol), PG) (PubMed:36823305). BMP is an important player in cargo sorting and degradation, regulation of cellular cholesterol levels and intercellular communication (PubMed:36823305). At neutral pH, hydrolyzes the sn-1 fatty acyl group of the lysophosphatidylcholines (PubMed:10092508).</text>
</comment>
<comment type="catalytic activity">
    <reaction evidence="12">
        <text>a 1,2-diacyl-sn-glycero-3-phosphocholine + H2O = a 2-acyl-sn-glycero-3-phosphocholine + a fatty acid + H(+)</text>
        <dbReference type="Rhea" id="RHEA:18689"/>
        <dbReference type="ChEBI" id="CHEBI:15377"/>
        <dbReference type="ChEBI" id="CHEBI:15378"/>
        <dbReference type="ChEBI" id="CHEBI:28868"/>
        <dbReference type="ChEBI" id="CHEBI:57643"/>
        <dbReference type="ChEBI" id="CHEBI:57875"/>
        <dbReference type="EC" id="3.1.1.32"/>
    </reaction>
    <physiologicalReaction direction="left-to-right" evidence="26">
        <dbReference type="Rhea" id="RHEA:18690"/>
    </physiologicalReaction>
</comment>
<comment type="catalytic activity">
    <reaction evidence="2">
        <text>1-hexadecanoyl-2-(9Z-octadecenoyl)-sn-glycero-3-phosphocholine + H2O = 2-(9Z-octadecenoyl)-sn-glycero-3-phosphocholine + hexadecanoate + H(+)</text>
        <dbReference type="Rhea" id="RHEA:38783"/>
        <dbReference type="ChEBI" id="CHEBI:7896"/>
        <dbReference type="ChEBI" id="CHEBI:15377"/>
        <dbReference type="ChEBI" id="CHEBI:15378"/>
        <dbReference type="ChEBI" id="CHEBI:73001"/>
        <dbReference type="ChEBI" id="CHEBI:76071"/>
    </reaction>
    <physiologicalReaction direction="left-to-right" evidence="2">
        <dbReference type="Rhea" id="RHEA:38784"/>
    </physiologicalReaction>
</comment>
<comment type="catalytic activity">
    <reaction evidence="2">
        <text>1-hexadecanoyl-2-glutaroyl-sn-glycero-3-phosphocholine + H2O = 2-glutaroyl-sn-glycero-3-phosphocholine + hexadecanoate + H(+)</text>
        <dbReference type="Rhea" id="RHEA:62480"/>
        <dbReference type="ChEBI" id="CHEBI:7896"/>
        <dbReference type="ChEBI" id="CHEBI:15377"/>
        <dbReference type="ChEBI" id="CHEBI:15378"/>
        <dbReference type="ChEBI" id="CHEBI:77756"/>
        <dbReference type="ChEBI" id="CHEBI:145781"/>
    </reaction>
    <physiologicalReaction direction="left-to-right" evidence="2">
        <dbReference type="Rhea" id="RHEA:62481"/>
    </physiologicalReaction>
</comment>
<comment type="catalytic activity">
    <reaction evidence="12">
        <text>1-hexadecanoyl-2-nonadioyl-sn-glycero-3-phosphocholine + H2O = 2-nonadioyl-sn-glycero-3-phosphocholine + hexadecanoate + H(+)</text>
        <dbReference type="Rhea" id="RHEA:62464"/>
        <dbReference type="ChEBI" id="CHEBI:7896"/>
        <dbReference type="ChEBI" id="CHEBI:15377"/>
        <dbReference type="ChEBI" id="CHEBI:15378"/>
        <dbReference type="ChEBI" id="CHEBI:78207"/>
        <dbReference type="ChEBI" id="CHEBI:145780"/>
    </reaction>
    <physiologicalReaction direction="left-to-right" evidence="26">
        <dbReference type="Rhea" id="RHEA:62465"/>
    </physiologicalReaction>
</comment>
<comment type="catalytic activity">
    <reaction evidence="2">
        <text>1-hexadecanoyl-2-(5-oxopentanoyl)-sn-glycero-3-phosphocholine + H2O = 2-(5-oxopentanoyl)-sn-glycero-3-phosphocholine + hexadecanoate + H(+)</text>
        <dbReference type="Rhea" id="RHEA:62484"/>
        <dbReference type="ChEBI" id="CHEBI:7896"/>
        <dbReference type="ChEBI" id="CHEBI:15377"/>
        <dbReference type="ChEBI" id="CHEBI:15378"/>
        <dbReference type="ChEBI" id="CHEBI:77890"/>
        <dbReference type="ChEBI" id="CHEBI:145782"/>
    </reaction>
    <physiologicalReaction direction="left-to-right" evidence="2">
        <dbReference type="Rhea" id="RHEA:62485"/>
    </physiologicalReaction>
</comment>
<comment type="catalytic activity">
    <reaction evidence="2">
        <text>1-hexadecanoyl-2-(9-oxononanoyl)-sn-glycero-3-phosphocholine + H2O = 2-(9-oxononanoyl)-sn-glycero-3-phosphocholine + hexadecanoate + H(+)</text>
        <dbReference type="Rhea" id="RHEA:62488"/>
        <dbReference type="ChEBI" id="CHEBI:7896"/>
        <dbReference type="ChEBI" id="CHEBI:15377"/>
        <dbReference type="ChEBI" id="CHEBI:15378"/>
        <dbReference type="ChEBI" id="CHEBI:61042"/>
        <dbReference type="ChEBI" id="CHEBI:145783"/>
    </reaction>
    <physiologicalReaction direction="left-to-right" evidence="2">
        <dbReference type="Rhea" id="RHEA:62489"/>
    </physiologicalReaction>
</comment>
<comment type="catalytic activity">
    <reaction evidence="1">
        <text>1,2-dihexadecanoyl-sn-glycero-3-phosphocholine + H2O = 2-hexadecanoyl-sn-glycero-3-phosphocholine + hexadecanoate + H(+)</text>
        <dbReference type="Rhea" id="RHEA:40487"/>
        <dbReference type="ChEBI" id="CHEBI:7896"/>
        <dbReference type="ChEBI" id="CHEBI:15377"/>
        <dbReference type="ChEBI" id="CHEBI:15378"/>
        <dbReference type="ChEBI" id="CHEBI:72999"/>
        <dbReference type="ChEBI" id="CHEBI:76078"/>
    </reaction>
    <physiologicalReaction direction="left-to-right" evidence="1">
        <dbReference type="Rhea" id="RHEA:40488"/>
    </physiologicalReaction>
</comment>
<comment type="catalytic activity">
    <reaction evidence="21">
        <text>a 1,2-diacyl-sn-glycero-3-phosphocholine + H2O = a 1-acyl-sn-glycero-3-phosphocholine + a fatty acid + H(+)</text>
        <dbReference type="Rhea" id="RHEA:15801"/>
        <dbReference type="ChEBI" id="CHEBI:15377"/>
        <dbReference type="ChEBI" id="CHEBI:15378"/>
        <dbReference type="ChEBI" id="CHEBI:28868"/>
        <dbReference type="ChEBI" id="CHEBI:57643"/>
        <dbReference type="ChEBI" id="CHEBI:58168"/>
        <dbReference type="EC" id="3.1.1.4"/>
    </reaction>
    <physiologicalReaction direction="left-to-right" evidence="21">
        <dbReference type="Rhea" id="RHEA:15802"/>
    </physiologicalReaction>
</comment>
<comment type="catalytic activity">
    <reaction evidence="21">
        <text>1,2-di-(9Z-octadecenoyl)-sn-glycero-3-phosphocholine + H2O = 1-(9Z-octadecenoyl)-sn-glycero-3-phosphocholine + (9Z)-octadecenoate + H(+)</text>
        <dbReference type="Rhea" id="RHEA:40923"/>
        <dbReference type="ChEBI" id="CHEBI:15377"/>
        <dbReference type="ChEBI" id="CHEBI:15378"/>
        <dbReference type="ChEBI" id="CHEBI:28610"/>
        <dbReference type="ChEBI" id="CHEBI:30823"/>
        <dbReference type="ChEBI" id="CHEBI:74669"/>
    </reaction>
    <physiologicalReaction direction="left-to-right" evidence="21">
        <dbReference type="Rhea" id="RHEA:40924"/>
    </physiologicalReaction>
</comment>
<comment type="catalytic activity">
    <reaction evidence="2">
        <text>1-hexadecanoyl-2-(9Z-octadecenoyl)-sn-glycero-3-phosphocholine + H2O = 1-hexadecanoyl-sn-glycero-3-phosphocholine + (9Z)-octadecenoate + H(+)</text>
        <dbReference type="Rhea" id="RHEA:38779"/>
        <dbReference type="ChEBI" id="CHEBI:15377"/>
        <dbReference type="ChEBI" id="CHEBI:15378"/>
        <dbReference type="ChEBI" id="CHEBI:30823"/>
        <dbReference type="ChEBI" id="CHEBI:72998"/>
        <dbReference type="ChEBI" id="CHEBI:73001"/>
    </reaction>
    <physiologicalReaction direction="left-to-right" evidence="2">
        <dbReference type="Rhea" id="RHEA:38780"/>
    </physiologicalReaction>
</comment>
<comment type="catalytic activity">
    <reaction evidence="1">
        <text>1,2-dihexadecanoyl-sn-glycero-3-phosphocholine + H2O = 1-hexadecanoyl-sn-glycero-3-phosphocholine + hexadecanoate + H(+)</text>
        <dbReference type="Rhea" id="RHEA:41223"/>
        <dbReference type="ChEBI" id="CHEBI:7896"/>
        <dbReference type="ChEBI" id="CHEBI:15377"/>
        <dbReference type="ChEBI" id="CHEBI:15378"/>
        <dbReference type="ChEBI" id="CHEBI:72998"/>
        <dbReference type="ChEBI" id="CHEBI:72999"/>
    </reaction>
    <physiologicalReaction direction="left-to-right" evidence="1">
        <dbReference type="Rhea" id="RHEA:41224"/>
    </physiologicalReaction>
</comment>
<comment type="catalytic activity">
    <reaction evidence="5">
        <text>a 1-acyl-sn-glycero-3-phosphocholine + H2O = sn-glycerol 3-phosphocholine + a fatty acid + H(+)</text>
        <dbReference type="Rhea" id="RHEA:15177"/>
        <dbReference type="ChEBI" id="CHEBI:15377"/>
        <dbReference type="ChEBI" id="CHEBI:15378"/>
        <dbReference type="ChEBI" id="CHEBI:16870"/>
        <dbReference type="ChEBI" id="CHEBI:28868"/>
        <dbReference type="ChEBI" id="CHEBI:58168"/>
        <dbReference type="EC" id="3.1.1.5"/>
    </reaction>
    <physiologicalReaction direction="left-to-right" evidence="20">
        <dbReference type="Rhea" id="RHEA:15178"/>
    </physiologicalReaction>
</comment>
<comment type="catalytic activity">
    <reaction evidence="5">
        <text>1-hexadecanoyl-sn-glycero-3-phosphocholine + H2O = sn-glycerol 3-phosphocholine + hexadecanoate + H(+)</text>
        <dbReference type="Rhea" id="RHEA:40435"/>
        <dbReference type="ChEBI" id="CHEBI:7896"/>
        <dbReference type="ChEBI" id="CHEBI:15377"/>
        <dbReference type="ChEBI" id="CHEBI:15378"/>
        <dbReference type="ChEBI" id="CHEBI:16870"/>
        <dbReference type="ChEBI" id="CHEBI:72998"/>
    </reaction>
    <physiologicalReaction direction="left-to-right" evidence="20">
        <dbReference type="Rhea" id="RHEA:40436"/>
    </physiologicalReaction>
</comment>
<comment type="catalytic activity">
    <reaction evidence="2">
        <text>N-(acetyl)-sphing-4-enine + a 1,2-diacyl-sn-glycero-3-phosphoethanolamine = 1-O-acyl-N-(acetyl)-sphing-4-enine + a 2-acyl-sn-glycero-3-phosphoethanolamine</text>
        <dbReference type="Rhea" id="RHEA:44536"/>
        <dbReference type="ChEBI" id="CHEBI:46979"/>
        <dbReference type="ChEBI" id="CHEBI:64612"/>
        <dbReference type="ChEBI" id="CHEBI:65213"/>
        <dbReference type="ChEBI" id="CHEBI:84483"/>
    </reaction>
    <physiologicalReaction direction="left-to-right" evidence="2">
        <dbReference type="Rhea" id="RHEA:44537"/>
    </physiologicalReaction>
</comment>
<comment type="catalytic activity">
    <reaction evidence="2">
        <text>1-hexadecanoyl-2-(9Z-octadecenoyl)-sn-glycero-3-phosphoethanolamine + N-(acetyl)-sphing-4-enine = 2-(9Z-octadecenoyl)-sn-glycero-3-phosphoethanolamine + 1-hexadecanoyl-N-(acetyl)-sphing-4-enine</text>
        <dbReference type="Rhea" id="RHEA:38827"/>
        <dbReference type="ChEBI" id="CHEBI:46979"/>
        <dbReference type="ChEBI" id="CHEBI:73007"/>
        <dbReference type="ChEBI" id="CHEBI:76077"/>
        <dbReference type="ChEBI" id="CHEBI:76088"/>
    </reaction>
    <physiologicalReaction direction="left-to-right" evidence="2">
        <dbReference type="Rhea" id="RHEA:38828"/>
    </physiologicalReaction>
</comment>
<comment type="catalytic activity">
    <reaction evidence="2">
        <text>1-hexadecanoyl-2-(9Z,12Z-octadecadienoyl)-sn-glycero-3-phosphoethanolamine + N-(acetyl)-sphing-4-enine = 2-(9Z,12Z)-octadecadienoyl-sn-glycero-3-phosphoethanolamine + 1-hexadecanoyl-N-(acetyl)-sphing-4-enine</text>
        <dbReference type="Rhea" id="RHEA:38831"/>
        <dbReference type="ChEBI" id="CHEBI:46979"/>
        <dbReference type="ChEBI" id="CHEBI:73008"/>
        <dbReference type="ChEBI" id="CHEBI:76077"/>
        <dbReference type="ChEBI" id="CHEBI:76090"/>
    </reaction>
    <physiologicalReaction direction="left-to-right" evidence="2">
        <dbReference type="Rhea" id="RHEA:38832"/>
    </physiologicalReaction>
</comment>
<comment type="catalytic activity">
    <reaction evidence="2">
        <text>1-hexadecanoyl-2-(5Z,8Z,11Z,14Z-eicosatetraenoyl)-sn-glycero-3-phosphoethanolamine + N-(acetyl)-sphing-4-enine = 2-(5Z,8Z,11Z,14Z)-eicosatetraenoyl-sn-glycero-3-phosphoethanolamine + 1-hexadecanoyl-N-(acetyl)-sphing-4-enine</text>
        <dbReference type="Rhea" id="RHEA:38843"/>
        <dbReference type="ChEBI" id="CHEBI:46979"/>
        <dbReference type="ChEBI" id="CHEBI:73009"/>
        <dbReference type="ChEBI" id="CHEBI:76077"/>
        <dbReference type="ChEBI" id="CHEBI:76091"/>
    </reaction>
    <physiologicalReaction direction="left-to-right" evidence="2">
        <dbReference type="Rhea" id="RHEA:38844"/>
    </physiologicalReaction>
</comment>
<comment type="catalytic activity">
    <reaction evidence="2">
        <text>N-(acetyl)-sphing-4-enine + a 1,2-diacyl-sn-glycero-3-phosphoethanolamine = 1-O-acyl-N-(acetyl)-sphing-4-enine + a 1-acyl-sn-glycero-3-phosphoethanolamine</text>
        <dbReference type="Rhea" id="RHEA:44532"/>
        <dbReference type="ChEBI" id="CHEBI:46979"/>
        <dbReference type="ChEBI" id="CHEBI:64381"/>
        <dbReference type="ChEBI" id="CHEBI:64612"/>
        <dbReference type="ChEBI" id="CHEBI:84483"/>
    </reaction>
    <physiologicalReaction direction="left-to-right" evidence="2">
        <dbReference type="Rhea" id="RHEA:44533"/>
    </physiologicalReaction>
</comment>
<comment type="catalytic activity">
    <reaction evidence="2">
        <text>1-hexadecanoyl-2-(9Z-octadecenoyl)-sn-glycero-3-phosphoethanolamine + N-(acetyl)-sphing-4-enine = 1-(9Z-octadecenoyl)-N-(acetyl)-sphing-4-enine + 1-hexadecanoyl-sn-glycero-3-phosphoethanolamine</text>
        <dbReference type="Rhea" id="RHEA:38823"/>
        <dbReference type="ChEBI" id="CHEBI:46979"/>
        <dbReference type="ChEBI" id="CHEBI:73004"/>
        <dbReference type="ChEBI" id="CHEBI:73007"/>
        <dbReference type="ChEBI" id="CHEBI:76054"/>
    </reaction>
    <physiologicalReaction direction="left-to-right" evidence="2">
        <dbReference type="Rhea" id="RHEA:38824"/>
    </physiologicalReaction>
</comment>
<comment type="catalytic activity">
    <reaction evidence="2">
        <text>1-hexadecanoyl-2-(9Z,12Z-octadecadienoyl)-sn-glycero-3-phosphoethanolamine + N-(acetyl)-sphing-4-enine = 1-(9Z,12Z-octadecadienoyl)-N-acetylsphing-4-enine + 1-hexadecanoyl-sn-glycero-3-phosphoethanolamine</text>
        <dbReference type="Rhea" id="RHEA:38835"/>
        <dbReference type="ChEBI" id="CHEBI:46979"/>
        <dbReference type="ChEBI" id="CHEBI:73004"/>
        <dbReference type="ChEBI" id="CHEBI:73008"/>
        <dbReference type="ChEBI" id="CHEBI:76086"/>
    </reaction>
    <physiologicalReaction direction="left-to-right" evidence="2">
        <dbReference type="Rhea" id="RHEA:38836"/>
    </physiologicalReaction>
</comment>
<comment type="catalytic activity">
    <reaction evidence="2">
        <text>1-hexadecanoyl-2-(5Z,8Z,11Z,14Z-eicosatetraenoyl)-sn-glycero-3-phosphoethanolamine + N-(acetyl)-sphing-4-enine = 1-(5Z,8Z,11Z,14Z)-eicosatetraenoyl-N-(acetyl)-sphing-4-enine + 1-hexadecanoyl-sn-glycero-3-phosphoethanolamine</text>
        <dbReference type="Rhea" id="RHEA:38839"/>
        <dbReference type="ChEBI" id="CHEBI:46979"/>
        <dbReference type="ChEBI" id="CHEBI:73004"/>
        <dbReference type="ChEBI" id="CHEBI:73009"/>
        <dbReference type="ChEBI" id="CHEBI:76080"/>
    </reaction>
    <physiologicalReaction direction="left-to-right" evidence="2">
        <dbReference type="Rhea" id="RHEA:38840"/>
    </physiologicalReaction>
</comment>
<comment type="catalytic activity">
    <reaction evidence="11 21">
        <text>N-(acetyl)-sphing-4-enine + a 1,2-diacyl-sn-glycero-3-phosphocholine = 1-O-acyl-N-(acetyl)-sphing-4-enine + a 1-acyl-sn-glycero-3-phosphocholine</text>
        <dbReference type="Rhea" id="RHEA:44508"/>
        <dbReference type="ChEBI" id="CHEBI:46979"/>
        <dbReference type="ChEBI" id="CHEBI:57643"/>
        <dbReference type="ChEBI" id="CHEBI:58168"/>
        <dbReference type="ChEBI" id="CHEBI:84483"/>
    </reaction>
    <physiologicalReaction direction="left-to-right" evidence="21 25">
        <dbReference type="Rhea" id="RHEA:44509"/>
    </physiologicalReaction>
</comment>
<comment type="catalytic activity">
    <reaction evidence="11">
        <text>1-hexadecanoyl-2-(9Z-octadecenoyl)-sn-glycero-3-phosphocholine + N-(acetyl)-sphing-4-enine = 1-(9Z-octadecenoyl)-N-(acetyl)-sphing-4-enine + 1-hexadecanoyl-sn-glycero-3-phosphocholine</text>
        <dbReference type="Rhea" id="RHEA:38755"/>
        <dbReference type="ChEBI" id="CHEBI:46979"/>
        <dbReference type="ChEBI" id="CHEBI:72998"/>
        <dbReference type="ChEBI" id="CHEBI:73001"/>
        <dbReference type="ChEBI" id="CHEBI:76054"/>
    </reaction>
    <physiologicalReaction direction="left-to-right" evidence="25">
        <dbReference type="Rhea" id="RHEA:38756"/>
    </physiologicalReaction>
</comment>
<comment type="catalytic activity">
    <reaction evidence="11">
        <text>1-hexadecanoyl-2-(9Z,12Z-octadecadienoyl)-sn-glycero-3-phosphocholine + N-(acetyl)-sphing-4-enine = 1-(9Z,12Z-octadecadienoyl)-N-acetylsphing-4-enine + 1-hexadecanoyl-sn-glycero-3-phosphocholine</text>
        <dbReference type="Rhea" id="RHEA:38807"/>
        <dbReference type="ChEBI" id="CHEBI:46979"/>
        <dbReference type="ChEBI" id="CHEBI:72998"/>
        <dbReference type="ChEBI" id="CHEBI:73002"/>
        <dbReference type="ChEBI" id="CHEBI:76086"/>
    </reaction>
    <physiologicalReaction direction="left-to-right" evidence="25">
        <dbReference type="Rhea" id="RHEA:38808"/>
    </physiologicalReaction>
</comment>
<comment type="catalytic activity">
    <reaction evidence="11">
        <text>1-hexadecanoyl-2-(5Z,8Z,11Z,14Z-eicosatetraenoyl)-sn-glycero-3-phosphocholine + N-(acetyl)-sphing-4-enine = 1-(5Z,8Z,11Z,14Z)-eicosatetraenoyl-N-(acetyl)-sphing-4-enine + 1-hexadecanoyl-sn-glycero-3-phosphocholine</text>
        <dbReference type="Rhea" id="RHEA:38771"/>
        <dbReference type="ChEBI" id="CHEBI:46979"/>
        <dbReference type="ChEBI" id="CHEBI:72998"/>
        <dbReference type="ChEBI" id="CHEBI:73003"/>
        <dbReference type="ChEBI" id="CHEBI:76080"/>
    </reaction>
    <physiologicalReaction direction="left-to-right" evidence="25">
        <dbReference type="Rhea" id="RHEA:38772"/>
    </physiologicalReaction>
</comment>
<comment type="catalytic activity">
    <reaction evidence="11">
        <text>1-hexadecanoyl-2-(4Z,7Z,10Z,13Z,16Z,19Z-docosahexaenoyl)-sn-glycero-3-phosphocholine + N-(acetyl)-sphing-4-enine = 1-(4Z,7Z,10Z,13Z,16Z,19Z-docosahexaenoyl)-N-(acetyl)-sphing-4-enine + 1-hexadecanoyl-sn-glycero-3-phosphocholine</text>
        <dbReference type="Rhea" id="RHEA:38819"/>
        <dbReference type="ChEBI" id="CHEBI:46979"/>
        <dbReference type="ChEBI" id="CHEBI:72998"/>
        <dbReference type="ChEBI" id="CHEBI:74963"/>
        <dbReference type="ChEBI" id="CHEBI:76087"/>
    </reaction>
    <physiologicalReaction direction="left-to-right" evidence="25">
        <dbReference type="Rhea" id="RHEA:38820"/>
    </physiologicalReaction>
</comment>
<comment type="catalytic activity">
    <reaction evidence="11">
        <text>1-octadecanoyl-2-(9Z-octadecenoyl)-sn-glycero-3-phosphocholine + N-(acetyl)-sphing-4-enine = 1-(9Z-octadecenoyl)-N-(acetyl)-sphing-4-enine + 1-octadecanoyl-sn-glycero-3-phosphocholine</text>
        <dbReference type="Rhea" id="RHEA:38795"/>
        <dbReference type="ChEBI" id="CHEBI:46979"/>
        <dbReference type="ChEBI" id="CHEBI:73858"/>
        <dbReference type="ChEBI" id="CHEBI:75034"/>
        <dbReference type="ChEBI" id="CHEBI:76054"/>
    </reaction>
    <physiologicalReaction direction="left-to-right" evidence="25">
        <dbReference type="Rhea" id="RHEA:38796"/>
    </physiologicalReaction>
</comment>
<comment type="catalytic activity">
    <reaction evidence="11">
        <text>1-octadecanoyl-2-(9Z,12Z)-octadecadienoyl-sn-glycero-3-phosphocholine + N-(acetyl)-sphing-4-enine = 1-(9Z,12Z-octadecadienoyl)-N-acetylsphing-4-enine + 1-octadecanoyl-sn-glycero-3-phosphocholine</text>
        <dbReference type="Rhea" id="RHEA:57108"/>
        <dbReference type="ChEBI" id="CHEBI:46979"/>
        <dbReference type="ChEBI" id="CHEBI:73858"/>
        <dbReference type="ChEBI" id="CHEBI:76086"/>
        <dbReference type="ChEBI" id="CHEBI:84822"/>
    </reaction>
    <physiologicalReaction direction="left-to-right" evidence="25">
        <dbReference type="Rhea" id="RHEA:57109"/>
    </physiologicalReaction>
</comment>
<comment type="catalytic activity">
    <reaction evidence="11">
        <text>1-octadecanoyl-2-(5Z,8Z,11Z,14Z-eicosatetraenoyl)-sn-glycero-3-phosphocholine + N-(acetyl)-sphing-4-enine = 1-(5Z,8Z,11Z,14Z)-eicosatetraenoyl-N-(acetyl)-sphing-4-enine + 1-octadecanoyl-sn-glycero-3-phosphocholine</text>
        <dbReference type="Rhea" id="RHEA:57116"/>
        <dbReference type="ChEBI" id="CHEBI:46979"/>
        <dbReference type="ChEBI" id="CHEBI:73858"/>
        <dbReference type="ChEBI" id="CHEBI:74965"/>
        <dbReference type="ChEBI" id="CHEBI:76080"/>
    </reaction>
    <physiologicalReaction direction="left-to-right" evidence="25">
        <dbReference type="Rhea" id="RHEA:57117"/>
    </physiologicalReaction>
</comment>
<comment type="catalytic activity">
    <reaction evidence="2">
        <text>1-(9Z-octadecenoyl)-2-hexadecanoyl-sn-glycero-3-phosphocholine + N-(acetyl)-sphing-4-enine = 1-hexadecanoyl-N-(acetyl)-sphing-4-enine + 1-(9Z-octadecenoyl)-sn-glycero-3-phosphocholine</text>
        <dbReference type="Rhea" id="RHEA:38763"/>
        <dbReference type="ChEBI" id="CHEBI:28610"/>
        <dbReference type="ChEBI" id="CHEBI:46979"/>
        <dbReference type="ChEBI" id="CHEBI:74667"/>
        <dbReference type="ChEBI" id="CHEBI:76077"/>
    </reaction>
    <physiologicalReaction direction="left-to-right" evidence="2">
        <dbReference type="Rhea" id="RHEA:38764"/>
    </physiologicalReaction>
</comment>
<comment type="catalytic activity">
    <reaction evidence="2">
        <text>1-(9Z)-octadecenoyl-2-octadecanoyl-sn-glycero-3-phosphocholine + N-(acetyl)-sphing-4-enine = 1-octadecanoyl-N-(acetyl)-sphing-4-enine + 1-(9Z-octadecenoyl)-sn-glycero-3-phosphocholine</text>
        <dbReference type="Rhea" id="RHEA:38803"/>
        <dbReference type="ChEBI" id="CHEBI:28610"/>
        <dbReference type="ChEBI" id="CHEBI:46979"/>
        <dbReference type="ChEBI" id="CHEBI:76073"/>
        <dbReference type="ChEBI" id="CHEBI:76074"/>
    </reaction>
    <physiologicalReaction direction="left-to-right" evidence="2">
        <dbReference type="Rhea" id="RHEA:38804"/>
    </physiologicalReaction>
</comment>
<comment type="catalytic activity">
    <reaction evidence="8 9 10 11 21">
        <text>1,2-di-(9Z-octadecenoyl)-sn-glycero-3-phosphocholine + N-(acetyl)-sphing-4-enine = 1-(9Z-octadecenoyl)-N-(acetyl)-sphing-4-enine + 1-(9Z-octadecenoyl)-sn-glycero-3-phosphocholine</text>
        <dbReference type="Rhea" id="RHEA:38703"/>
        <dbReference type="ChEBI" id="CHEBI:28610"/>
        <dbReference type="ChEBI" id="CHEBI:46979"/>
        <dbReference type="ChEBI" id="CHEBI:74669"/>
        <dbReference type="ChEBI" id="CHEBI:76054"/>
    </reaction>
    <physiologicalReaction direction="left-to-right" evidence="21 22 23 24 25">
        <dbReference type="Rhea" id="RHEA:38704"/>
    </physiologicalReaction>
</comment>
<comment type="catalytic activity">
    <reaction evidence="11">
        <text>N-(acetyl)-sphing-4-enine + a 1,2-diacyl-sn-glycero-3-phosphocholine = 1-O-acyl-N-(acetyl)-sphing-4-enine + a 2-acyl-sn-glycero-3-phosphocholine</text>
        <dbReference type="Rhea" id="RHEA:44512"/>
        <dbReference type="ChEBI" id="CHEBI:46979"/>
        <dbReference type="ChEBI" id="CHEBI:57643"/>
        <dbReference type="ChEBI" id="CHEBI:57875"/>
        <dbReference type="ChEBI" id="CHEBI:84483"/>
    </reaction>
    <physiologicalReaction direction="left-to-right" evidence="25">
        <dbReference type="Rhea" id="RHEA:44513"/>
    </physiologicalReaction>
</comment>
<comment type="catalytic activity">
    <reaction evidence="2">
        <text>1-hexadecanoyl-2-(9Z-octadecenoyl)-sn-glycero-3-phosphocholine + N-(acetyl)-sphing-4-enine = 1-hexadecanoyl-N-(acetyl)-sphing-4-enine + 2-(9Z-octadecenoyl)-sn-glycero-3-phosphocholine</text>
        <dbReference type="Rhea" id="RHEA:38759"/>
        <dbReference type="ChEBI" id="CHEBI:46979"/>
        <dbReference type="ChEBI" id="CHEBI:73001"/>
        <dbReference type="ChEBI" id="CHEBI:76071"/>
        <dbReference type="ChEBI" id="CHEBI:76077"/>
    </reaction>
    <physiologicalReaction direction="left-to-right" evidence="2">
        <dbReference type="Rhea" id="RHEA:38760"/>
    </physiologicalReaction>
</comment>
<comment type="catalytic activity">
    <reaction evidence="2">
        <text>1-hexadecanoyl-2-(9Z,12Z-octadecadienoyl)-sn-glycero-3-phosphocholine + N-(acetyl)-sphing-4-enine = 2-(9Z,12Z-octadecadienoyl)-sn-glycero-3-phosphocholine + 1-hexadecanoyl-N-(acetyl)-sphing-4-enine</text>
        <dbReference type="Rhea" id="RHEA:38811"/>
        <dbReference type="ChEBI" id="CHEBI:46979"/>
        <dbReference type="ChEBI" id="CHEBI:73002"/>
        <dbReference type="ChEBI" id="CHEBI:76077"/>
        <dbReference type="ChEBI" id="CHEBI:76084"/>
    </reaction>
    <physiologicalReaction direction="left-to-right" evidence="2">
        <dbReference type="Rhea" id="RHEA:38812"/>
    </physiologicalReaction>
</comment>
<comment type="catalytic activity">
    <reaction evidence="11">
        <text>1-hexadecanoyl-2-(5Z,8Z,11Z,14Z-eicosatetraenoyl)-sn-glycero-3-phosphocholine + N-(acetyl)-sphing-4-enine = 1-hexadecanoyl-N-(acetyl)-sphing-4-enine + 2-(5Z,8Z,11Z,14Z)-eicosatetraenoyl-sn-glycero-3-phosphocholine</text>
        <dbReference type="Rhea" id="RHEA:38775"/>
        <dbReference type="ChEBI" id="CHEBI:46979"/>
        <dbReference type="ChEBI" id="CHEBI:73003"/>
        <dbReference type="ChEBI" id="CHEBI:76077"/>
        <dbReference type="ChEBI" id="CHEBI:76079"/>
    </reaction>
    <physiologicalReaction direction="left-to-right" evidence="25">
        <dbReference type="Rhea" id="RHEA:38776"/>
    </physiologicalReaction>
</comment>
<comment type="catalytic activity">
    <reaction evidence="11">
        <text>1-hexadecanoyl-2-(4Z,7Z,10Z,13Z,16Z,19Z-docosahexaenoyl)-sn-glycero-3-phosphocholine + N-(acetyl)-sphing-4-enine = 2-(4Z,7Z,10Z,13Z,16Z,19Z-docosahexaenoyl)-sn-glycero-3-phosphocholine + 1-hexadecanoyl-N-(acetyl)-sphing-4-enine</text>
        <dbReference type="Rhea" id="RHEA:38815"/>
        <dbReference type="ChEBI" id="CHEBI:46979"/>
        <dbReference type="ChEBI" id="CHEBI:74963"/>
        <dbReference type="ChEBI" id="CHEBI:76077"/>
        <dbReference type="ChEBI" id="CHEBI:76085"/>
    </reaction>
    <physiologicalReaction direction="left-to-right" evidence="25">
        <dbReference type="Rhea" id="RHEA:38816"/>
    </physiologicalReaction>
</comment>
<comment type="catalytic activity">
    <reaction evidence="2">
        <text>1-hexadecanoyl-2-nonadioyl-sn-glycero-3-phosphocholine + N-(acetyl)-sphing-4-enine = 2-nonadioyl-sn-glycero-3-phosphocholine + 1-hexadecanoyl-N-(acetyl)-sphing-4-enine</text>
        <dbReference type="Rhea" id="RHEA:62472"/>
        <dbReference type="ChEBI" id="CHEBI:46979"/>
        <dbReference type="ChEBI" id="CHEBI:76077"/>
        <dbReference type="ChEBI" id="CHEBI:78207"/>
        <dbReference type="ChEBI" id="CHEBI:145780"/>
    </reaction>
    <physiologicalReaction direction="left-to-right" evidence="2">
        <dbReference type="Rhea" id="RHEA:62473"/>
    </physiologicalReaction>
</comment>
<comment type="catalytic activity">
    <reaction evidence="2">
        <text>1-octadecanoyl-2-(9Z-octadecenoyl)-sn-glycero-3-phosphocholine + N-(acetyl)-sphing-4-enine = 1-octadecanoyl-N-(acetyl)-sphing-4-enine + 2-(9Z-octadecenoyl)-sn-glycero-3-phosphocholine</text>
        <dbReference type="Rhea" id="RHEA:38799"/>
        <dbReference type="ChEBI" id="CHEBI:46979"/>
        <dbReference type="ChEBI" id="CHEBI:75034"/>
        <dbReference type="ChEBI" id="CHEBI:76071"/>
        <dbReference type="ChEBI" id="CHEBI:76074"/>
    </reaction>
    <physiologicalReaction direction="left-to-right" evidence="2">
        <dbReference type="Rhea" id="RHEA:38800"/>
    </physiologicalReaction>
</comment>
<comment type="catalytic activity">
    <reaction evidence="11">
        <text>1-octadecanoyl-2-(5Z,8Z,11Z,14Z-eicosatetraenoyl)-sn-glycero-3-phosphocholine + N-(acetyl)-sphing-4-enine = 1-octadecanoyl-N-(acetyl)-sphing-4-enine + 2-(5Z,8Z,11Z,14Z)-eicosatetraenoyl-sn-glycero-3-phosphocholine</text>
        <dbReference type="Rhea" id="RHEA:57120"/>
        <dbReference type="ChEBI" id="CHEBI:46979"/>
        <dbReference type="ChEBI" id="CHEBI:74965"/>
        <dbReference type="ChEBI" id="CHEBI:76074"/>
        <dbReference type="ChEBI" id="CHEBI:76079"/>
    </reaction>
    <physiologicalReaction direction="left-to-right" evidence="25">
        <dbReference type="Rhea" id="RHEA:57121"/>
    </physiologicalReaction>
</comment>
<comment type="catalytic activity">
    <reaction evidence="11">
        <text>1-(9Z-octadecenoyl)-2-hexadecanoyl-sn-glycero-3-phosphocholine + N-(acetyl)-sphing-4-enine = 1-(9Z-octadecenoyl)-N-(acetyl)-sphing-4-enine + 2-hexadecanoyl-sn-glycero-3-phosphocholine</text>
        <dbReference type="Rhea" id="RHEA:38767"/>
        <dbReference type="ChEBI" id="CHEBI:46979"/>
        <dbReference type="ChEBI" id="CHEBI:74667"/>
        <dbReference type="ChEBI" id="CHEBI:76054"/>
        <dbReference type="ChEBI" id="CHEBI:76078"/>
    </reaction>
    <physiologicalReaction direction="left-to-right" evidence="25">
        <dbReference type="Rhea" id="RHEA:38768"/>
    </physiologicalReaction>
</comment>
<comment type="catalytic activity">
    <reaction evidence="11">
        <text>1-(9Z)-octadecenoyl-2-octadecanoyl-sn-glycero-3-phosphocholine + N-(acetyl)-sphing-4-enine = 2-octadecanoyl-sn-glycero-3-phosphocholine + 1-(9Z-octadecenoyl)-N-(acetyl)-sphing-4-enine</text>
        <dbReference type="Rhea" id="RHEA:38791"/>
        <dbReference type="ChEBI" id="CHEBI:46979"/>
        <dbReference type="ChEBI" id="CHEBI:76054"/>
        <dbReference type="ChEBI" id="CHEBI:76073"/>
        <dbReference type="ChEBI" id="CHEBI:76076"/>
    </reaction>
    <physiologicalReaction direction="left-to-right" evidence="25">
        <dbReference type="Rhea" id="RHEA:38792"/>
    </physiologicalReaction>
</comment>
<comment type="catalytic activity">
    <reaction evidence="11">
        <text>a 1,2-diacyl-sn-glycero-3-phospho-L-serine + N-(acetyl)-sphing-4-enine = a 2-acyl-sn-glycero-3-phospho-L-serine + 1-O-acyl-N-(acetyl)-sphing-4-enine</text>
        <dbReference type="Rhea" id="RHEA:78355"/>
        <dbReference type="ChEBI" id="CHEBI:46979"/>
        <dbReference type="ChEBI" id="CHEBI:57262"/>
        <dbReference type="ChEBI" id="CHEBI:65214"/>
        <dbReference type="ChEBI" id="CHEBI:84483"/>
    </reaction>
    <physiologicalReaction direction="left-to-right" evidence="25">
        <dbReference type="Rhea" id="RHEA:78356"/>
    </physiologicalReaction>
</comment>
<comment type="catalytic activity">
    <reaction evidence="11">
        <text>1-octadecanoyl-2-(9Z-octadecenoyl)-sn-glycero-3-phospho-L-serine + N-(acetyl)-sphing-4-enine = 2-(9Z-octadecenoyl)-sn-glycero-3-phospho-L-serine + 1-octadecanoyl-N-(acetyl)-sphing-4-enine</text>
        <dbReference type="Rhea" id="RHEA:57140"/>
        <dbReference type="ChEBI" id="CHEBI:46979"/>
        <dbReference type="ChEBI" id="CHEBI:76074"/>
        <dbReference type="ChEBI" id="CHEBI:77342"/>
        <dbReference type="ChEBI" id="CHEBI:78260"/>
    </reaction>
    <physiologicalReaction direction="left-to-right" evidence="25">
        <dbReference type="Rhea" id="RHEA:57141"/>
    </physiologicalReaction>
</comment>
<comment type="catalytic activity">
    <reaction evidence="11">
        <text>a 1,2-diacyl-sn-glycero-3-phospho-L-serine + N-(acetyl)-sphing-4-enine = 1-O-acyl-N-(acetyl)-sphing-4-enine + a 1-acyl-sn-glycero-3-phospho-L-serine</text>
        <dbReference type="Rhea" id="RHEA:78351"/>
        <dbReference type="ChEBI" id="CHEBI:46979"/>
        <dbReference type="ChEBI" id="CHEBI:57262"/>
        <dbReference type="ChEBI" id="CHEBI:64379"/>
        <dbReference type="ChEBI" id="CHEBI:84483"/>
    </reaction>
    <physiologicalReaction direction="left-to-right" evidence="25">
        <dbReference type="Rhea" id="RHEA:78352"/>
    </physiologicalReaction>
</comment>
<comment type="catalytic activity">
    <reaction evidence="11">
        <text>1-octadecanoyl-2-(9Z-octadecenoyl)-sn-glycero-3-phospho-L-serine + N-(acetyl)-sphing-4-enine = 1-octadecanoyl-sn-glycero-3-phosphoserine + 1-(9Z-octadecenoyl)-N-(acetyl)-sphing-4-enine</text>
        <dbReference type="Rhea" id="RHEA:57136"/>
        <dbReference type="ChEBI" id="CHEBI:46979"/>
        <dbReference type="ChEBI" id="CHEBI:76054"/>
        <dbReference type="ChEBI" id="CHEBI:78260"/>
        <dbReference type="ChEBI" id="CHEBI:84467"/>
    </reaction>
    <physiologicalReaction direction="left-to-right" evidence="25">
        <dbReference type="Rhea" id="RHEA:57137"/>
    </physiologicalReaction>
</comment>
<comment type="catalytic activity">
    <reaction evidence="11">
        <text>a 1,2-diacyl-sn-glycero-3-phospho-(1'-sn-glycerol) + N-(acetyl)-sphing-4-enine = 2-acyl-sn-glycero-3-phospho-(1'-sn-glycerol) + 1-O-acyl-N-(acetyl)-sphing-4-enine</text>
        <dbReference type="Rhea" id="RHEA:78359"/>
        <dbReference type="ChEBI" id="CHEBI:46979"/>
        <dbReference type="ChEBI" id="CHEBI:64716"/>
        <dbReference type="ChEBI" id="CHEBI:76528"/>
        <dbReference type="ChEBI" id="CHEBI:84483"/>
    </reaction>
    <physiologicalReaction direction="left-to-right" evidence="25">
        <dbReference type="Rhea" id="RHEA:78360"/>
    </physiologicalReaction>
</comment>
<comment type="catalytic activity">
    <reaction evidence="11">
        <text>1-octadecanoyl-2-(9Z-octadecenoyl)-sn-glycero-3-phospho-(1'-sn-glycerol) + N-(acetyl)-sphing-4-enine = 2-(9Z-octadecenoyl)-sn-glycero-3-phospho-(1'-sn-glycerol) + 1-octadecanoyl-N-(acetyl)-sphing-4-enine</text>
        <dbReference type="Rhea" id="RHEA:57144"/>
        <dbReference type="ChEBI" id="CHEBI:46979"/>
        <dbReference type="ChEBI" id="CHEBI:72845"/>
        <dbReference type="ChEBI" id="CHEBI:76074"/>
        <dbReference type="ChEBI" id="CHEBI:141490"/>
    </reaction>
    <physiologicalReaction direction="left-to-right" evidence="25">
        <dbReference type="Rhea" id="RHEA:57145"/>
    </physiologicalReaction>
</comment>
<comment type="catalytic activity">
    <reaction evidence="11">
        <text>a 1,2-diacyl-sn-glycero-3-phospho-(1'-sn-glycerol) + N-(acetyl)-sphing-4-enine = 1-O-acyl-N-(acetyl)-sphing-4-enine + 1-acyl-sn-glycero-3-phospho-(1'-sn-glycerol)</text>
        <dbReference type="Rhea" id="RHEA:78363"/>
        <dbReference type="ChEBI" id="CHEBI:46979"/>
        <dbReference type="ChEBI" id="CHEBI:64716"/>
        <dbReference type="ChEBI" id="CHEBI:64840"/>
        <dbReference type="ChEBI" id="CHEBI:84483"/>
    </reaction>
    <physiologicalReaction direction="left-to-right" evidence="25">
        <dbReference type="Rhea" id="RHEA:78364"/>
    </physiologicalReaction>
</comment>
<comment type="catalytic activity">
    <reaction evidence="11">
        <text>1-octadecanoyl-2-(9Z-octadecenoyl)-sn-glycero-3-phospho-(1'-sn-glycerol) + N-(acetyl)-sphing-4-enine = 1-octadecanoyl-sn-glycero-3-phospho-(1'-sn-glycerol) + 1-(9Z-octadecenoyl)-N-(acetyl)-sphing-4-enine</text>
        <dbReference type="Rhea" id="RHEA:57148"/>
        <dbReference type="ChEBI" id="CHEBI:46979"/>
        <dbReference type="ChEBI" id="CHEBI:72827"/>
        <dbReference type="ChEBI" id="CHEBI:72845"/>
        <dbReference type="ChEBI" id="CHEBI:76054"/>
    </reaction>
    <physiologicalReaction direction="left-to-right" evidence="25">
        <dbReference type="Rhea" id="RHEA:57149"/>
    </physiologicalReaction>
</comment>
<comment type="catalytic activity">
    <reaction evidence="2">
        <text>an N-acylethanolamine + a 1,2-diacyl-sn-glycero-3-phosphocholine = 2-(acylamino)ethyl fatty acid + a 2-acyl-sn-glycero-3-phosphocholine</text>
        <dbReference type="Rhea" id="RHEA:78055"/>
        <dbReference type="ChEBI" id="CHEBI:52640"/>
        <dbReference type="ChEBI" id="CHEBI:57643"/>
        <dbReference type="ChEBI" id="CHEBI:57875"/>
        <dbReference type="ChEBI" id="CHEBI:84481"/>
    </reaction>
    <physiologicalReaction direction="left-to-right" evidence="2">
        <dbReference type="Rhea" id="RHEA:78056"/>
    </physiologicalReaction>
</comment>
<comment type="catalytic activity">
    <reaction evidence="2">
        <text>an N-acylethanolamine + a 1,2-diacyl-sn-glycero-3-phosphocholine = 2-(acylamino)ethyl fatty acid + a 1-acyl-sn-glycero-3-phosphocholine</text>
        <dbReference type="Rhea" id="RHEA:78059"/>
        <dbReference type="ChEBI" id="CHEBI:52640"/>
        <dbReference type="ChEBI" id="CHEBI:57643"/>
        <dbReference type="ChEBI" id="CHEBI:58168"/>
        <dbReference type="ChEBI" id="CHEBI:84481"/>
    </reaction>
    <physiologicalReaction direction="left-to-right" evidence="2">
        <dbReference type="Rhea" id="RHEA:78060"/>
    </physiologicalReaction>
</comment>
<comment type="catalytic activity">
    <reaction evidence="2">
        <text>N-(5Z,8Z,11Z,14Z-eicosatetraenoyl)-ethanolamine + 1,2-di-(9Z-octadecenoyl)-sn-glycero-3-phosphocholine = 2-[(5Z,8Z,11Z,14Z)-eicosatetraenoylamino]ethyl (9Z)-octadecenoate + (9Z-octadecenoyl)-sn-glycero-3-phosphocholine</text>
        <dbReference type="Rhea" id="RHEA:38751"/>
        <dbReference type="ChEBI" id="CHEBI:2700"/>
        <dbReference type="ChEBI" id="CHEBI:74669"/>
        <dbReference type="ChEBI" id="CHEBI:76070"/>
        <dbReference type="ChEBI" id="CHEBI:76083"/>
    </reaction>
    <physiologicalReaction direction="left-to-right" evidence="2">
        <dbReference type="Rhea" id="RHEA:38752"/>
    </physiologicalReaction>
</comment>
<comment type="catalytic activity">
    <reaction evidence="2">
        <text>N-(9Z-octadecenoyl) ethanolamine + 1,2-di-(9Z-octadecenoyl)-sn-glycero-3-phosphocholine = 2-[(9Z)-octadecenoylamino]ethyl (9Z)-octadecenoate + (9Z-octadecenoyl)-sn-glycero-3-phosphocholine</text>
        <dbReference type="Rhea" id="RHEA:38747"/>
        <dbReference type="ChEBI" id="CHEBI:71466"/>
        <dbReference type="ChEBI" id="CHEBI:74669"/>
        <dbReference type="ChEBI" id="CHEBI:76068"/>
        <dbReference type="ChEBI" id="CHEBI:76083"/>
    </reaction>
    <physiologicalReaction direction="left-to-right" evidence="2">
        <dbReference type="Rhea" id="RHEA:38748"/>
    </physiologicalReaction>
</comment>
<comment type="catalytic activity">
    <reaction evidence="2">
        <text>a 3-acyl-sn-glycerol + a 1,2-diacyl-sn-glycero-3-phosphocholine = a 1,3-diacylglycerol + a 1-acyl-sn-glycero-3-phosphocholine</text>
        <dbReference type="Rhea" id="RHEA:78131"/>
        <dbReference type="ChEBI" id="CHEBI:47777"/>
        <dbReference type="ChEBI" id="CHEBI:57643"/>
        <dbReference type="ChEBI" id="CHEBI:58168"/>
        <dbReference type="ChEBI" id="CHEBI:64760"/>
    </reaction>
    <physiologicalReaction direction="left-to-right" evidence="2">
        <dbReference type="Rhea" id="RHEA:78132"/>
    </physiologicalReaction>
</comment>
<comment type="catalytic activity">
    <reaction evidence="2">
        <text>a 3-acyl-sn-glycerol + a 1,2-diacyl-sn-glycero-3-phosphocholine = a 1,3-diacylglycerol + a 2-acyl-sn-glycero-3-phosphocholine</text>
        <dbReference type="Rhea" id="RHEA:78135"/>
        <dbReference type="ChEBI" id="CHEBI:47777"/>
        <dbReference type="ChEBI" id="CHEBI:57643"/>
        <dbReference type="ChEBI" id="CHEBI:57875"/>
        <dbReference type="ChEBI" id="CHEBI:64760"/>
    </reaction>
    <physiologicalReaction direction="left-to-right" evidence="2">
        <dbReference type="Rhea" id="RHEA:78136"/>
    </physiologicalReaction>
</comment>
<comment type="catalytic activity">
    <reaction evidence="2">
        <text>3-(9Z-octadecenoyl)-sn-glycerol + 1,2-di-(9Z-octadecenoyl)-sn-glycero-3-phosphocholine = 1,3-di-(9Z-octadecenoyl)-glycerol + (9Z-octadecenoyl)-sn-glycero-3-phosphocholine</text>
        <dbReference type="Rhea" id="RHEA:38743"/>
        <dbReference type="ChEBI" id="CHEBI:74669"/>
        <dbReference type="ChEBI" id="CHEBI:75735"/>
        <dbReference type="ChEBI" id="CHEBI:75938"/>
        <dbReference type="ChEBI" id="CHEBI:76083"/>
    </reaction>
    <physiologicalReaction direction="left-to-right" evidence="2">
        <dbReference type="Rhea" id="RHEA:38744"/>
    </physiologicalReaction>
</comment>
<comment type="catalytic activity">
    <reaction evidence="2">
        <text>3-hexadecanoyl-sn-glycerol + 1,2-di-(9Z-octadecenoyl)-sn-glycero-3-phosphocholine = 1-(9Z)-octadecenoyl-3-hexadecanoyl-sn-glycerol + (9Z-octadecenoyl)-sn-glycero-3-phosphocholine</text>
        <dbReference type="Rhea" id="RHEA:38731"/>
        <dbReference type="ChEBI" id="CHEBI:64757"/>
        <dbReference type="ChEBI" id="CHEBI:74669"/>
        <dbReference type="ChEBI" id="CHEBI:75867"/>
        <dbReference type="ChEBI" id="CHEBI:76083"/>
    </reaction>
    <physiologicalReaction direction="left-to-right" evidence="2">
        <dbReference type="Rhea" id="RHEA:38732"/>
    </physiologicalReaction>
</comment>
<comment type="catalytic activity">
    <reaction evidence="2">
        <text>a 1-acyl-sn-glycerol + a 1,2-diacyl-sn-glycero-3-phosphocholine = a 1,3-diacylglycerol + a 2-acyl-sn-glycero-3-phosphocholine</text>
        <dbReference type="Rhea" id="RHEA:78139"/>
        <dbReference type="ChEBI" id="CHEBI:47777"/>
        <dbReference type="ChEBI" id="CHEBI:57643"/>
        <dbReference type="ChEBI" id="CHEBI:57875"/>
        <dbReference type="ChEBI" id="CHEBI:64683"/>
    </reaction>
    <physiologicalReaction direction="left-to-right" evidence="2">
        <dbReference type="Rhea" id="RHEA:78140"/>
    </physiologicalReaction>
</comment>
<comment type="catalytic activity">
    <reaction evidence="2">
        <text>a 1-acyl-sn-glycerol + a 1,2-diacyl-sn-glycero-3-phosphocholine = a 1,3-diacylglycerol + a 1-acyl-sn-glycero-3-phosphocholine</text>
        <dbReference type="Rhea" id="RHEA:78143"/>
        <dbReference type="ChEBI" id="CHEBI:47777"/>
        <dbReference type="ChEBI" id="CHEBI:57643"/>
        <dbReference type="ChEBI" id="CHEBI:58168"/>
        <dbReference type="ChEBI" id="CHEBI:64683"/>
    </reaction>
    <physiologicalReaction direction="left-to-right" evidence="2">
        <dbReference type="Rhea" id="RHEA:78144"/>
    </physiologicalReaction>
</comment>
<comment type="catalytic activity">
    <reaction evidence="2">
        <text>1-(9Z-octadecenoyl)-sn-glycerol + 1,2-di-(9Z-octadecenoyl)-sn-glycero-3-phosphocholine = 1,3-di-(9Z-octadecenoyl)-glycerol + (9Z-octadecenoyl)-sn-glycero-3-phosphocholine</text>
        <dbReference type="Rhea" id="RHEA:38739"/>
        <dbReference type="ChEBI" id="CHEBI:74669"/>
        <dbReference type="ChEBI" id="CHEBI:75735"/>
        <dbReference type="ChEBI" id="CHEBI:75757"/>
        <dbReference type="ChEBI" id="CHEBI:76083"/>
    </reaction>
    <physiologicalReaction direction="left-to-right" evidence="2">
        <dbReference type="Rhea" id="RHEA:38740"/>
    </physiologicalReaction>
</comment>
<comment type="catalytic activity">
    <reaction evidence="2">
        <text>1-hexadecanoyl-sn-glycerol + 1,2-di-(9Z-octadecenoyl)-sn-glycero-3-phosphocholine = 1-hexadecanoyl-3-(9Z)-octadecenoyl-sn-glycerol + (9Z-octadecenoyl)-sn-glycero-3-phosphocholine</text>
        <dbReference type="Rhea" id="RHEA:38727"/>
        <dbReference type="ChEBI" id="CHEBI:74669"/>
        <dbReference type="ChEBI" id="CHEBI:75542"/>
        <dbReference type="ChEBI" id="CHEBI:75868"/>
        <dbReference type="ChEBI" id="CHEBI:76083"/>
    </reaction>
    <physiologicalReaction direction="left-to-right" evidence="2">
        <dbReference type="Rhea" id="RHEA:38728"/>
    </physiologicalReaction>
</comment>
<comment type="catalytic activity">
    <reaction evidence="2">
        <text>a 2-acylglycerol + a 1,2-diacyl-sn-glycero-3-phosphocholine = a 1,2-diacylglycerol + a 2-acyl-sn-glycero-3-phosphocholine</text>
        <dbReference type="Rhea" id="RHEA:78443"/>
        <dbReference type="ChEBI" id="CHEBI:17389"/>
        <dbReference type="ChEBI" id="CHEBI:49172"/>
        <dbReference type="ChEBI" id="CHEBI:57643"/>
        <dbReference type="ChEBI" id="CHEBI:57875"/>
    </reaction>
    <physiologicalReaction direction="left-to-right" evidence="2">
        <dbReference type="Rhea" id="RHEA:78444"/>
    </physiologicalReaction>
</comment>
<comment type="catalytic activity">
    <reaction evidence="2">
        <text>a 2-acylglycerol + a 1,2-diacyl-sn-glycero-3-phosphocholine = a 1,2-diacylglycerol + a 1-acyl-sn-glycero-3-phosphocholine</text>
        <dbReference type="Rhea" id="RHEA:78439"/>
        <dbReference type="ChEBI" id="CHEBI:17389"/>
        <dbReference type="ChEBI" id="CHEBI:49172"/>
        <dbReference type="ChEBI" id="CHEBI:57643"/>
        <dbReference type="ChEBI" id="CHEBI:58168"/>
    </reaction>
    <physiologicalReaction direction="left-to-right" evidence="2">
        <dbReference type="Rhea" id="RHEA:78440"/>
    </physiologicalReaction>
</comment>
<comment type="catalytic activity">
    <reaction evidence="2">
        <text>2-hexadecanoylglycerol + 1,2-di-(9Z-octadecenoyl)-sn-glycero-3-phosphocholine = 1-(9Z)-octadecenoyl-2-hexadecanoylglycerol + (9Z-octadecenoyl)-sn-glycero-3-phosphocholine</text>
        <dbReference type="Rhea" id="RHEA:38735"/>
        <dbReference type="ChEBI" id="CHEBI:74669"/>
        <dbReference type="ChEBI" id="CHEBI:75455"/>
        <dbReference type="ChEBI" id="CHEBI:76065"/>
        <dbReference type="ChEBI" id="CHEBI:76083"/>
    </reaction>
    <physiologicalReaction direction="left-to-right" evidence="2">
        <dbReference type="Rhea" id="RHEA:38736"/>
    </physiologicalReaction>
</comment>
<comment type="catalytic activity">
    <reaction evidence="2">
        <text>1-O-alkylglycerol + a 1,2-diacyl-sn-glycero-3-phosphocholine = 1-O-alkyl-3-acylglycerol + a 1-acyl-sn-glycero-3-phosphocholine</text>
        <dbReference type="Rhea" id="RHEA:78039"/>
        <dbReference type="ChEBI" id="CHEBI:57643"/>
        <dbReference type="ChEBI" id="CHEBI:58168"/>
        <dbReference type="ChEBI" id="CHEBI:76225"/>
        <dbReference type="ChEBI" id="CHEBI:77997"/>
    </reaction>
    <physiologicalReaction direction="left-to-right" evidence="2">
        <dbReference type="Rhea" id="RHEA:78040"/>
    </physiologicalReaction>
</comment>
<comment type="catalytic activity">
    <reaction evidence="2">
        <text>1-O-alkylglycerol + a 1,2-diacyl-sn-glycero-3-phosphocholine = 1-O-alkyl-3-acylglycerol + a 2-acyl-sn-glycero-3-phosphocholine</text>
        <dbReference type="Rhea" id="RHEA:78043"/>
        <dbReference type="ChEBI" id="CHEBI:57643"/>
        <dbReference type="ChEBI" id="CHEBI:57875"/>
        <dbReference type="ChEBI" id="CHEBI:76225"/>
        <dbReference type="ChEBI" id="CHEBI:77997"/>
    </reaction>
    <physiologicalReaction direction="left-to-right" evidence="2">
        <dbReference type="Rhea" id="RHEA:78044"/>
    </physiologicalReaction>
</comment>
<comment type="catalytic activity">
    <reaction evidence="2">
        <text>1-O-hexadecylglycerol + 1,2-di-(9Z-octadecenoyl)-sn-glycero-3-phosphocholine = 1-O-hexadecyl-3-(9Z)-octadecenoylglycerol + (9Z-octadecenoyl)-sn-glycero-3-phosphocholine</text>
        <dbReference type="Rhea" id="RHEA:38711"/>
        <dbReference type="ChEBI" id="CHEBI:74669"/>
        <dbReference type="ChEBI" id="CHEBI:76061"/>
        <dbReference type="ChEBI" id="CHEBI:76062"/>
        <dbReference type="ChEBI" id="CHEBI:76083"/>
    </reaction>
    <physiologicalReaction direction="left-to-right" evidence="2">
        <dbReference type="Rhea" id="RHEA:38712"/>
    </physiologicalReaction>
</comment>
<comment type="catalytic activity">
    <reaction evidence="25">
        <text>1-O-alkyl-2-acyl-sn-glycerol + a 1,2-diacyl-sn-glycero-3-phosphocholine = 1-O-alkyl-2,3-diacyl-sn-glycerol + a 2-acyl-sn-glycero-3-phosphocholine</text>
        <dbReference type="Rhea" id="RHEA:78431"/>
        <dbReference type="ChEBI" id="CHEBI:52595"/>
        <dbReference type="ChEBI" id="CHEBI:57643"/>
        <dbReference type="ChEBI" id="CHEBI:57875"/>
        <dbReference type="ChEBI" id="CHEBI:76585"/>
    </reaction>
    <physiologicalReaction direction="left-to-right" evidence="25">
        <dbReference type="Rhea" id="RHEA:78432"/>
    </physiologicalReaction>
</comment>
<comment type="catalytic activity">
    <reaction evidence="25">
        <text>1-O-alkyl-2-acyl-sn-glycerol + a 1,2-diacyl-sn-glycero-3-phosphocholine = 1-O-alkyl-2,3-diacyl-sn-glycerol + a 1-acyl-sn-glycero-3-phosphocholine</text>
        <dbReference type="Rhea" id="RHEA:78435"/>
        <dbReference type="ChEBI" id="CHEBI:52595"/>
        <dbReference type="ChEBI" id="CHEBI:57643"/>
        <dbReference type="ChEBI" id="CHEBI:58168"/>
        <dbReference type="ChEBI" id="CHEBI:76585"/>
    </reaction>
    <physiologicalReaction direction="left-to-right" evidence="25">
        <dbReference type="Rhea" id="RHEA:78436"/>
    </physiologicalReaction>
</comment>
<comment type="catalytic activity">
    <reaction evidence="11">
        <text>1-O-hexadecyl-2-acetyl-sn-glycerol + 1,2-di-(9Z-octadecenoyl)-sn-glycero-3-phosphocholine = 1-O-hexadecyl-2-acetyl-3-(9Z)-octadecenoyl-sn-glycerol + (9Z-octadecenoyl)-sn-glycero-3-phosphocholine</text>
        <dbReference type="Rhea" id="RHEA:38707"/>
        <dbReference type="ChEBI" id="CHEBI:74669"/>
        <dbReference type="ChEBI" id="CHEBI:75936"/>
        <dbReference type="ChEBI" id="CHEBI:76055"/>
        <dbReference type="ChEBI" id="CHEBI:76083"/>
    </reaction>
    <physiologicalReaction direction="left-to-right" evidence="25">
        <dbReference type="Rhea" id="RHEA:38708"/>
    </physiologicalReaction>
</comment>
<comment type="catalytic activity">
    <reaction evidence="2">
        <text>1-O-hexadecyl-2-O-methyl-sn-glycerol + 1,2-di-(9Z-octadecenoyl)-sn-glycero-3-phosphocholine = 1-O-hexadecyl-2-O-methyl-3-(9Z)-octadecenoyl-sn-glycerol + (9Z-octadecenoyl)-sn-glycero-3-phosphocholine</text>
        <dbReference type="Rhea" id="RHEA:38723"/>
        <dbReference type="ChEBI" id="CHEBI:74669"/>
        <dbReference type="ChEBI" id="CHEBI:76063"/>
        <dbReference type="ChEBI" id="CHEBI:76064"/>
        <dbReference type="ChEBI" id="CHEBI:76083"/>
    </reaction>
    <physiologicalReaction direction="left-to-right" evidence="2">
        <dbReference type="Rhea" id="RHEA:38724"/>
    </physiologicalReaction>
</comment>
<comment type="catalytic activity">
    <reaction evidence="3">
        <text>a 1,2-diacyl-sn-glycero-3-phosphoethanolamine + H2O = a 1-acyl-sn-glycero-3-phosphoethanolamine + a fatty acid + H(+)</text>
        <dbReference type="Rhea" id="RHEA:44604"/>
        <dbReference type="ChEBI" id="CHEBI:15377"/>
        <dbReference type="ChEBI" id="CHEBI:15378"/>
        <dbReference type="ChEBI" id="CHEBI:28868"/>
        <dbReference type="ChEBI" id="CHEBI:64381"/>
        <dbReference type="ChEBI" id="CHEBI:64612"/>
    </reaction>
    <physiologicalReaction direction="left-to-right" evidence="3">
        <dbReference type="Rhea" id="RHEA:44605"/>
    </physiologicalReaction>
</comment>
<comment type="catalytic activity">
    <reaction evidence="3">
        <text>1-acyl-2-(5Z,8Z,11Z,14Z)-eicosatetraenoyl-sn-glycero-3-phosphoethanolamine + H2O = a 1-acyl-sn-glycero-3-phosphoethanolamine + (5Z,8Z,11Z,14Z)-eicosatetraenoate + H(+)</text>
        <dbReference type="Rhea" id="RHEA:40647"/>
        <dbReference type="ChEBI" id="CHEBI:15377"/>
        <dbReference type="ChEBI" id="CHEBI:15378"/>
        <dbReference type="ChEBI" id="CHEBI:32395"/>
        <dbReference type="ChEBI" id="CHEBI:64381"/>
        <dbReference type="ChEBI" id="CHEBI:75067"/>
    </reaction>
    <physiologicalReaction direction="left-to-right" evidence="3">
        <dbReference type="Rhea" id="RHEA:40648"/>
    </physiologicalReaction>
</comment>
<comment type="catalytic activity">
    <reaction evidence="13">
        <text>a 1,2-diacyl-sn-glycero-3-phospho-(1'-sn-glycerol) + H2O = 1-acyl-sn-glycero-3-phospho-(1'-sn-glycerol) + a fatty acid + H(+)</text>
        <dbReference type="Rhea" id="RHEA:44416"/>
        <dbReference type="ChEBI" id="CHEBI:15377"/>
        <dbReference type="ChEBI" id="CHEBI:15378"/>
        <dbReference type="ChEBI" id="CHEBI:28868"/>
        <dbReference type="ChEBI" id="CHEBI:64716"/>
        <dbReference type="ChEBI" id="CHEBI:64840"/>
    </reaction>
    <physiologicalReaction direction="left-to-right" evidence="13">
        <dbReference type="Rhea" id="RHEA:44417"/>
    </physiologicalReaction>
</comment>
<comment type="catalytic activity">
    <reaction evidence="13">
        <text>1-hexadecanoyl-2-(9Z-octadecenoyl)-sn-glycero-3-phospho-(1'-sn-glycerol) + H2O = 1-hexadecanoyl-sn-glycero-3-phospho-(1'-sn-glycerol) + (9Z)-octadecenoate + H(+)</text>
        <dbReference type="Rhea" id="RHEA:40919"/>
        <dbReference type="ChEBI" id="CHEBI:15377"/>
        <dbReference type="ChEBI" id="CHEBI:15378"/>
        <dbReference type="ChEBI" id="CHEBI:30823"/>
        <dbReference type="ChEBI" id="CHEBI:72841"/>
        <dbReference type="ChEBI" id="CHEBI:75158"/>
    </reaction>
    <physiologicalReaction direction="left-to-right" evidence="13">
        <dbReference type="Rhea" id="RHEA:40920"/>
    </physiologicalReaction>
</comment>
<comment type="catalytic activity">
    <reaction evidence="13">
        <text>a 1,2-diacyl-sn-glycero-3-phospho-(1'-sn-glycerol) + H2O = 2-acyl-sn-glycero-3-phospho-(1'-sn-glycerol) + a fatty acid + H(+)</text>
        <dbReference type="Rhea" id="RHEA:67428"/>
        <dbReference type="ChEBI" id="CHEBI:15377"/>
        <dbReference type="ChEBI" id="CHEBI:15378"/>
        <dbReference type="ChEBI" id="CHEBI:28868"/>
        <dbReference type="ChEBI" id="CHEBI:64716"/>
        <dbReference type="ChEBI" id="CHEBI:76528"/>
    </reaction>
    <physiologicalReaction direction="left-to-right" evidence="13">
        <dbReference type="Rhea" id="RHEA:67429"/>
    </physiologicalReaction>
</comment>
<comment type="catalytic activity">
    <reaction evidence="13">
        <text>1-hexadecanoyl-2-(9Z-octadecenoyl)-sn-glycero-3-phospho-(1'-sn-glycerol) + H2O = 2-(9Z-octadecenoyl)-sn-glycero-3-phospho-(1'-sn-glycerol) + hexadecanoate + H(+)</text>
        <dbReference type="Rhea" id="RHEA:74103"/>
        <dbReference type="ChEBI" id="CHEBI:7896"/>
        <dbReference type="ChEBI" id="CHEBI:15377"/>
        <dbReference type="ChEBI" id="CHEBI:15378"/>
        <dbReference type="ChEBI" id="CHEBI:72841"/>
        <dbReference type="ChEBI" id="CHEBI:141490"/>
    </reaction>
    <physiologicalReaction direction="left-to-right" evidence="13">
        <dbReference type="Rhea" id="RHEA:74104"/>
    </physiologicalReaction>
</comment>
<comment type="activity regulation">
    <text evidence="12">Inhibited by zinc ions at neutral pH. Zinc ions in plasma may keep the enzyme from hydrolyzing inappropriate substrates.</text>
</comment>
<comment type="biophysicochemical properties">
    <phDependence>
        <text evidence="11">Optimum pH is 4-4.5.</text>
    </phDependence>
</comment>
<comment type="interaction">
    <interactant intactId="EBI-721115">
        <id>Q8NCC3</id>
    </interactant>
    <interactant intactId="EBI-356687">
        <id>P40227</id>
        <label>CCT6A</label>
    </interactant>
    <organismsDiffer>false</organismsDiffer>
    <experiments>2</experiments>
</comment>
<comment type="subcellular location">
    <subcellularLocation>
        <location evidence="9">Lysosome</location>
    </subcellularLocation>
    <subcellularLocation>
        <location evidence="5 8">Secreted</location>
    </subcellularLocation>
    <subcellularLocation>
        <location evidence="10">Membrane</location>
        <topology evidence="10">Peripheral membrane protein</topology>
    </subcellularLocation>
</comment>
<comment type="alternative products">
    <event type="alternative splicing"/>
    <isoform>
        <id>Q8NCC3-1</id>
        <name>1</name>
        <sequence type="displayed"/>
    </isoform>
    <isoform>
        <id>Q8NCC3-2</id>
        <name>2</name>
        <sequence type="described" ref="VSP_056689 VSP_056690"/>
    </isoform>
</comment>
<comment type="tissue specificity">
    <text evidence="5 8">Detected in blood plasma (at protein level) (PubMed:10092508, PubMed:20410020). Ubiquitous. Highly expressed in heart, placenta, skeletal muscle, kidney and pancreas. Detected at lower levels in spleen, thymus, prostate, testis, ovary, small intestine, colon and peripheral blood leukocytes (PubMed:10092508).</text>
</comment>
<comment type="PTM">
    <text evidence="6 9">N-glycosylated (PubMed:11790796, PubMed:23958596). N-glycosylation is important for maturation of the enzyme and normal subcellular location (PubMed:23958596).</text>
</comment>
<comment type="similarity">
    <text evidence="19">Belongs to the AB hydrolase superfamily. Lipase family.</text>
</comment>
<comment type="sequence caution" evidence="19">
    <conflict type="erroneous initiation">
        <sequence resource="EMBL-CDS" id="CAB53675"/>
    </conflict>
</comment>